<feature type="chain" id="PRO_0000053665" description="Estrogen-related receptor gamma">
    <location>
        <begin position="1"/>
        <end position="458"/>
    </location>
</feature>
<feature type="domain" description="NR LBD" evidence="3">
    <location>
        <begin position="233"/>
        <end position="457"/>
    </location>
</feature>
<feature type="DNA-binding region" description="Nuclear receptor" evidence="2">
    <location>
        <begin position="125"/>
        <end position="200"/>
    </location>
</feature>
<feature type="zinc finger region" description="NR C4-type" evidence="2">
    <location>
        <begin position="128"/>
        <end position="148"/>
    </location>
</feature>
<feature type="zinc finger region" description="NR C4-type" evidence="2">
    <location>
        <begin position="164"/>
        <end position="188"/>
    </location>
</feature>
<feature type="region of interest" description="Disordered" evidence="4">
    <location>
        <begin position="42"/>
        <end position="85"/>
    </location>
</feature>
<feature type="compositionally biased region" description="Polar residues" evidence="4">
    <location>
        <begin position="42"/>
        <end position="52"/>
    </location>
</feature>
<feature type="compositionally biased region" description="Low complexity" evidence="4">
    <location>
        <begin position="57"/>
        <end position="70"/>
    </location>
</feature>
<feature type="modified residue" description="Phosphoserine" evidence="22 23">
    <location>
        <position position="45"/>
    </location>
</feature>
<feature type="cross-link" description="Glycyl lysine isopeptide (Lys-Gly) (interchain with G-Cter in SUMO)">
    <location>
        <position position="40"/>
    </location>
</feature>
<feature type="splice variant" id="VSP_003702" description="In isoform 2, isoform 3 and isoform 4." evidence="16 17 18 19 20">
    <location>
        <begin position="1"/>
        <end position="23"/>
    </location>
</feature>
<feature type="splice variant" id="VSP_047156" description="In isoform 5." evidence="21">
    <original>MDSVELCLPESFSLHYEEE</original>
    <variation>MWRECDWGLGAVKSDLACVPSAKR</variation>
    <location>
        <begin position="1"/>
        <end position="19"/>
    </location>
</feature>
<feature type="splice variant" id="VSP_045980" description="In isoform 4." evidence="17">
    <location>
        <begin position="158"/>
        <end position="196"/>
    </location>
</feature>
<feature type="splice variant" id="VSP_013301" description="In isoform 3 and isoform 5." evidence="18">
    <original>Y</original>
    <variation>LLWSDPAD</variation>
    <location>
        <position position="234"/>
    </location>
</feature>
<feature type="sequence variant" id="VAR_019229" description="In dbSNP:rs11572693." evidence="15">
    <original>T</original>
    <variation>M</variation>
    <location>
        <position position="50"/>
    </location>
</feature>
<feature type="mutagenesis site" description="No effect on transcriptional activity." evidence="11">
    <original>F</original>
    <variation>A</variation>
    <variation>E</variation>
    <location>
        <position position="38"/>
    </location>
</feature>
<feature type="mutagenesis site" description="4-fold increase in transcriptional activity." evidence="11">
    <original>I</original>
    <variation>A</variation>
    <location>
        <position position="39"/>
    </location>
</feature>
<feature type="mutagenesis site" description="Abolishes sumoylation. 7-fold increase in transcriptional activity." evidence="8 10 11">
    <original>K</original>
    <variation>R</variation>
    <location>
        <position position="40"/>
    </location>
</feature>
<feature type="mutagenesis site" description="No effect on transcriptional activity." evidence="11">
    <original>T</original>
    <variation>A</variation>
    <location>
        <position position="41"/>
    </location>
</feature>
<feature type="mutagenesis site" description="4-fold increase in transcriptional activity." evidence="11">
    <original>E</original>
    <variation>A</variation>
    <location>
        <position position="42"/>
    </location>
</feature>
<feature type="mutagenesis site" description="No effect on transcriptional activity." evidence="11">
    <original>S</original>
    <variation>A</variation>
    <variation>E</variation>
    <location>
        <position position="44"/>
    </location>
</feature>
<feature type="mutagenesis site" description="Abolishes sumoylation. Increased transcriptional activity." evidence="10 11">
    <original>S</original>
    <variation>A</variation>
    <location>
        <position position="45"/>
    </location>
</feature>
<feature type="mutagenesis site" description="No change in sumoylation nor transcriptional activity." evidence="10 11">
    <original>S</original>
    <variation>D</variation>
    <location>
        <position position="45"/>
    </location>
</feature>
<feature type="sequence conflict" description="In Ref. 4; AAQ93376." evidence="21" ref="4">
    <original>E</original>
    <variation>K</variation>
    <location>
        <position position="19"/>
    </location>
</feature>
<feature type="sequence conflict" description="In Ref. 3; AAC39899." evidence="21" ref="3">
    <original>F</original>
    <variation>S</variation>
    <location>
        <position position="151"/>
    </location>
</feature>
<feature type="sequence conflict" description="In Ref. 3; AAC39899." evidence="21" ref="3">
    <original>T</original>
    <variation>K</variation>
    <location>
        <position position="155"/>
    </location>
</feature>
<feature type="sequence conflict" description="In Ref. 3; AAC39899." evidence="21" ref="3">
    <original>G</original>
    <variation>A</variation>
    <location>
        <position position="158"/>
    </location>
</feature>
<feature type="sequence conflict" description="In Ref. 5; BAG54746." evidence="21" ref="5">
    <original>V</original>
    <variation>A</variation>
    <location>
        <position position="227"/>
    </location>
</feature>
<feature type="sequence conflict" description="In Ref. 3; AAC39899." evidence="21" ref="3">
    <original>L</original>
    <variation>C</variation>
    <location>
        <position position="271"/>
    </location>
</feature>
<feature type="sequence conflict" description="In Ref. 3; AAC39899." evidence="21" ref="3">
    <original>V</original>
    <variation>F</variation>
    <location>
        <position position="313"/>
    </location>
</feature>
<feature type="sequence conflict" description="In Ref. 5; CAH18320." evidence="21" ref="5">
    <original>L</original>
    <variation>P</variation>
    <location>
        <position position="449"/>
    </location>
</feature>
<feature type="sequence conflict" description="In Ref. 3; AAC39899." evidence="21" ref="3">
    <original>V</original>
    <variation>VC</variation>
    <location>
        <position position="458"/>
    </location>
</feature>
<feature type="turn" evidence="26">
    <location>
        <begin position="129"/>
        <end position="131"/>
    </location>
</feature>
<feature type="strand" evidence="26">
    <location>
        <begin position="132"/>
        <end position="134"/>
    </location>
</feature>
<feature type="strand" evidence="26">
    <location>
        <begin position="137"/>
        <end position="139"/>
    </location>
</feature>
<feature type="strand" evidence="26">
    <location>
        <begin position="142"/>
        <end position="144"/>
    </location>
</feature>
<feature type="helix" evidence="26">
    <location>
        <begin position="146"/>
        <end position="157"/>
    </location>
</feature>
<feature type="strand" evidence="26">
    <location>
        <begin position="165"/>
        <end position="168"/>
    </location>
</feature>
<feature type="strand" evidence="26">
    <location>
        <begin position="176"/>
        <end position="179"/>
    </location>
</feature>
<feature type="helix" evidence="26">
    <location>
        <begin position="181"/>
        <end position="191"/>
    </location>
</feature>
<feature type="helix" evidence="26">
    <location>
        <begin position="195"/>
        <end position="197"/>
    </location>
</feature>
<feature type="helix" evidence="25">
    <location>
        <begin position="236"/>
        <end position="243"/>
    </location>
</feature>
<feature type="strand" evidence="24">
    <location>
        <begin position="255"/>
        <end position="257"/>
    </location>
</feature>
<feature type="helix" evidence="25">
    <location>
        <begin position="261"/>
        <end position="283"/>
    </location>
</feature>
<feature type="helix" evidence="25">
    <location>
        <begin position="289"/>
        <end position="291"/>
    </location>
</feature>
<feature type="helix" evidence="25">
    <location>
        <begin position="294"/>
        <end position="316"/>
    </location>
</feature>
<feature type="turn" evidence="25">
    <location>
        <begin position="317"/>
        <end position="319"/>
    </location>
</feature>
<feature type="strand" evidence="25">
    <location>
        <begin position="320"/>
        <end position="322"/>
    </location>
</feature>
<feature type="strand" evidence="25">
    <location>
        <begin position="324"/>
        <end position="327"/>
    </location>
</feature>
<feature type="strand" evidence="25">
    <location>
        <begin position="330"/>
        <end position="332"/>
    </location>
</feature>
<feature type="helix" evidence="25">
    <location>
        <begin position="334"/>
        <end position="340"/>
    </location>
</feature>
<feature type="helix" evidence="25">
    <location>
        <begin position="343"/>
        <end position="359"/>
    </location>
</feature>
<feature type="helix" evidence="25">
    <location>
        <begin position="363"/>
        <end position="375"/>
    </location>
</feature>
<feature type="helix" evidence="25">
    <location>
        <begin position="385"/>
        <end position="406"/>
    </location>
</feature>
<feature type="helix" evidence="25">
    <location>
        <begin position="413"/>
        <end position="418"/>
    </location>
</feature>
<feature type="helix" evidence="25">
    <location>
        <begin position="421"/>
        <end position="441"/>
    </location>
</feature>
<feature type="helix" evidence="25">
    <location>
        <begin position="448"/>
        <end position="454"/>
    </location>
</feature>
<sequence>MDSVELCLPESFSLHYEEELLCRMSNKDRHIDSSCSSFIKTEPSSPASLTDSVNHHSPGGSSDASGSYSSTMNGHQNGLDSPPLYPSAPILGGSGPVRKLYDDCSSTIVEDPQTKCEYMLNSMPKRLCLVCGDIASGYHYGVASCEACKAFFKRTIQGNIEYSCPATNECEITKRRRKSCQACRFMKCLKVGMLKEGVRLDRVRGGRQKYKRRIDAENSPYLNPQLVQPAKKPYNKIVSHLLVAEPEKIYAMPDPTVPDSDIKALTTLCDLADRELVVIIGWAKHIPGFSTLSLADQMSLLQSAWMEILILGVVYRSLSFEDELVYADDYIMDEDQSKLAGLLDLNNAILQLVKKYKSMKLEKEEFVTLKAIALANSDSMHIEDVEAVQKLQDVLHEALQDYEAGQHMEDPRRAGKMLMTLPLLRQTSTKAVQHFYNIKLEGKVPMHKLFLEMLEAKV</sequence>
<proteinExistence type="evidence at protein level"/>
<organism>
    <name type="scientific">Homo sapiens</name>
    <name type="common">Human</name>
    <dbReference type="NCBI Taxonomy" id="9606"/>
    <lineage>
        <taxon>Eukaryota</taxon>
        <taxon>Metazoa</taxon>
        <taxon>Chordata</taxon>
        <taxon>Craniata</taxon>
        <taxon>Vertebrata</taxon>
        <taxon>Euteleostomi</taxon>
        <taxon>Mammalia</taxon>
        <taxon>Eutheria</taxon>
        <taxon>Euarchontoglires</taxon>
        <taxon>Primates</taxon>
        <taxon>Haplorrhini</taxon>
        <taxon>Catarrhini</taxon>
        <taxon>Hominidae</taxon>
        <taxon>Homo</taxon>
    </lineage>
</organism>
<keyword id="KW-0002">3D-structure</keyword>
<keyword id="KW-0007">Acetylation</keyword>
<keyword id="KW-0010">Activator</keyword>
<keyword id="KW-0025">Alternative splicing</keyword>
<keyword id="KW-0238">DNA-binding</keyword>
<keyword id="KW-1017">Isopeptide bond</keyword>
<keyword id="KW-0479">Metal-binding</keyword>
<keyword id="KW-0539">Nucleus</keyword>
<keyword id="KW-0597">Phosphoprotein</keyword>
<keyword id="KW-1267">Proteomics identification</keyword>
<keyword id="KW-0675">Receptor</keyword>
<keyword id="KW-1185">Reference proteome</keyword>
<keyword id="KW-0804">Transcription</keyword>
<keyword id="KW-0805">Transcription regulation</keyword>
<keyword id="KW-0832">Ubl conjugation</keyword>
<keyword id="KW-0862">Zinc</keyword>
<keyword id="KW-0863">Zinc-finger</keyword>
<gene>
    <name type="primary">ESRRG</name>
    <name type="synonym">ERR3</name>
    <name type="synonym">ERRG2</name>
    <name type="synonym">KIAA0832</name>
    <name type="synonym">NR3B3</name>
</gene>
<comment type="function">
    <text evidence="1 5 10 11 13">Orphan receptor that acts as a transcription activator in the absence of bound ligand. Binds specifically to an estrogen response element and activates reporter genes controlled by estrogen response elements (By similarity). Induces the expression of PERM1 in the skeletal muscle.</text>
</comment>
<comment type="subunit">
    <text evidence="1 6 7 9">Homodimer. Binds TLE1, PNRC1 and PNRC2. Binds GRIP1 (By similarity). Interacts with NRIP1, NCOA1 and NCOR2.</text>
</comment>
<comment type="interaction">
    <interactant intactId="EBI-2834260">
        <id>P62508</id>
    </interactant>
    <interactant intactId="EBI-748597">
        <id>Q05D60</id>
        <label>DEUP1</label>
    </interactant>
    <organismsDiffer>false</organismsDiffer>
    <experiments>3</experiments>
</comment>
<comment type="interaction">
    <interactant intactId="EBI-2834260">
        <id>P62508</id>
    </interactant>
    <interactant intactId="EBI-2125614">
        <id>Q9BVG8</id>
        <label>KIFC3</label>
    </interactant>
    <organismsDiffer>false</organismsDiffer>
    <experiments>3</experiments>
</comment>
<comment type="interaction">
    <interactant intactId="EBI-2834260">
        <id>P62508</id>
    </interactant>
    <interactant intactId="EBI-748397">
        <id>P50222</id>
        <label>MEOX2</label>
    </interactant>
    <organismsDiffer>false</organismsDiffer>
    <experiments>3</experiments>
</comment>
<comment type="interaction">
    <interactant intactId="EBI-2834260">
        <id>P62508</id>
    </interactant>
    <interactant intactId="EBI-946109">
        <id>P51843</id>
        <label>NR0B1</label>
    </interactant>
    <organismsDiffer>false</organismsDiffer>
    <experiments>3</experiments>
</comment>
<comment type="interaction">
    <interactant intactId="EBI-2834260">
        <id>P62508</id>
    </interactant>
    <interactant intactId="EBI-295715">
        <id>Q12769</id>
        <label>NUP160</label>
    </interactant>
    <organismsDiffer>false</organismsDiffer>
    <experiments>3</experiments>
</comment>
<comment type="interaction">
    <interactant intactId="EBI-2834260">
        <id>P62508</id>
    </interactant>
    <interactant intactId="EBI-765486">
        <id>Q9UBK2</id>
        <label>PPARGC1A</label>
    </interactant>
    <organismsDiffer>false</organismsDiffer>
    <experiments>4</experiments>
</comment>
<comment type="interaction">
    <interactant intactId="EBI-2834260">
        <id>P62508</id>
    </interactant>
    <interactant intactId="EBI-308778">
        <id>A0MZ66</id>
        <label>SHTN1</label>
    </interactant>
    <organismsDiffer>false</organismsDiffer>
    <experiments>3</experiments>
</comment>
<comment type="interaction">
    <interactant intactId="EBI-2834260">
        <id>P62508</id>
    </interactant>
    <interactant intactId="EBI-10175576">
        <id>G2XKQ0</id>
        <label>SUMO1P1</label>
    </interactant>
    <organismsDiffer>false</organismsDiffer>
    <experiments>3</experiments>
</comment>
<comment type="interaction">
    <interactant intactId="EBI-12001340">
        <id>P62508-3</id>
    </interactant>
    <interactant intactId="EBI-2838710">
        <id>Q8NFM4</id>
        <label>ADCY4</label>
    </interactant>
    <organismsDiffer>false</organismsDiffer>
    <experiments>6</experiments>
</comment>
<comment type="interaction">
    <interactant intactId="EBI-12001340">
        <id>P62508-3</id>
    </interactant>
    <interactant intactId="EBI-495465">
        <id>Q13315</id>
        <label>ATM</label>
    </interactant>
    <organismsDiffer>false</organismsDiffer>
    <experiments>3</experiments>
</comment>
<comment type="interaction">
    <interactant intactId="EBI-12001340">
        <id>P62508-3</id>
    </interactant>
    <interactant intactId="EBI-21843491">
        <id>Q86WA6-2</id>
        <label>BPHL</label>
    </interactant>
    <organismsDiffer>false</organismsDiffer>
    <experiments>3</experiments>
</comment>
<comment type="interaction">
    <interactant intactId="EBI-12001340">
        <id>P62508-3</id>
    </interactant>
    <interactant intactId="EBI-10303102">
        <id>Q9BZE7</id>
        <label>C22orf23</label>
    </interactant>
    <organismsDiffer>false</organismsDiffer>
    <experiments>3</experiments>
</comment>
<comment type="interaction">
    <interactant intactId="EBI-12001340">
        <id>P62508-3</id>
    </interactant>
    <interactant intactId="EBI-12020154">
        <id>Q13555-5</id>
        <label>CAMK2G</label>
    </interactant>
    <organismsDiffer>false</organismsDiffer>
    <experiments>3</experiments>
</comment>
<comment type="interaction">
    <interactant intactId="EBI-12001340">
        <id>P62508-3</id>
    </interactant>
    <interactant intactId="EBI-748597">
        <id>Q05D60</id>
        <label>DEUP1</label>
    </interactant>
    <organismsDiffer>false</organismsDiffer>
    <experiments>3</experiments>
</comment>
<comment type="interaction">
    <interactant intactId="EBI-12001340">
        <id>P62508-3</id>
    </interactant>
    <interactant intactId="EBI-2349927">
        <id>Q5JST6</id>
        <label>EFHC2</label>
    </interactant>
    <organismsDiffer>false</organismsDiffer>
    <experiments>3</experiments>
</comment>
<comment type="interaction">
    <interactant intactId="EBI-12001340">
        <id>P62508-3</id>
    </interactant>
    <interactant intactId="EBI-372412">
        <id>P11474</id>
        <label>ESRRA</label>
    </interactant>
    <organismsDiffer>false</organismsDiffer>
    <experiments>3</experiments>
</comment>
<comment type="interaction">
    <interactant intactId="EBI-12001340">
        <id>P62508-3</id>
    </interactant>
    <interactant intactId="EBI-13303537">
        <id>O95718-2</id>
        <label>ESRRB</label>
    </interactant>
    <organismsDiffer>false</organismsDiffer>
    <experiments>3</experiments>
</comment>
<comment type="interaction">
    <interactant intactId="EBI-12001340">
        <id>P62508-3</id>
    </interactant>
    <interactant intactId="EBI-12001340">
        <id>P62508-3</id>
        <label>ESRRG</label>
    </interactant>
    <organismsDiffer>false</organismsDiffer>
    <experiments>3</experiments>
</comment>
<comment type="interaction">
    <interactant intactId="EBI-12001340">
        <id>P62508-3</id>
    </interactant>
    <interactant intactId="EBI-371841">
        <id>Q15024</id>
        <label>EXOSC7</label>
    </interactant>
    <organismsDiffer>false</organismsDiffer>
    <experiments>3</experiments>
</comment>
<comment type="interaction">
    <interactant intactId="EBI-12001340">
        <id>P62508-3</id>
    </interactant>
    <interactant intactId="EBI-11977223">
        <id>O95990-4</id>
        <label>FAM107A</label>
    </interactant>
    <organismsDiffer>false</organismsDiffer>
    <experiments>3</experiments>
</comment>
<comment type="interaction">
    <interactant intactId="EBI-12001340">
        <id>P62508-3</id>
    </interactant>
    <interactant intactId="EBI-8468186">
        <id>Q8IZU1</id>
        <label>FAM9A</label>
    </interactant>
    <organismsDiffer>false</organismsDiffer>
    <experiments>3</experiments>
</comment>
<comment type="interaction">
    <interactant intactId="EBI-12001340">
        <id>P62508-3</id>
    </interactant>
    <interactant intactId="EBI-1754067">
        <id>Q14296</id>
        <label>FASTK</label>
    </interactant>
    <organismsDiffer>false</organismsDiffer>
    <experiments>3</experiments>
</comment>
<comment type="interaction">
    <interactant intactId="EBI-12001340">
        <id>P62508-3</id>
    </interactant>
    <interactant intactId="EBI-307531">
        <id>P23508</id>
        <label>MCC</label>
    </interactant>
    <organismsDiffer>false</organismsDiffer>
    <experiments>3</experiments>
</comment>
<comment type="interaction">
    <interactant intactId="EBI-12001340">
        <id>P62508-3</id>
    </interactant>
    <interactant intactId="EBI-5454865">
        <id>Q6IN84</id>
        <label>MRM1</label>
    </interactant>
    <organismsDiffer>false</organismsDiffer>
    <experiments>5</experiments>
</comment>
<comment type="interaction">
    <interactant intactId="EBI-12001340">
        <id>P62508-3</id>
    </interactant>
    <interactant intactId="EBI-946109">
        <id>P51843</id>
        <label>NR0B1</label>
    </interactant>
    <organismsDiffer>false</organismsDiffer>
    <experiments>6</experiments>
</comment>
<comment type="interaction">
    <interactant intactId="EBI-12001340">
        <id>P62508-3</id>
    </interactant>
    <interactant intactId="EBI-3910729">
        <id>Q15466</id>
        <label>NR0B2</label>
    </interactant>
    <organismsDiffer>false</organismsDiffer>
    <experiments>3</experiments>
</comment>
<comment type="interaction">
    <interactant intactId="EBI-12001340">
        <id>P62508-3</id>
    </interactant>
    <interactant intactId="EBI-746484">
        <id>P48552</id>
        <label>NRIP1</label>
    </interactant>
    <organismsDiffer>false</organismsDiffer>
    <experiments>3</experiments>
</comment>
<comment type="interaction">
    <interactant intactId="EBI-12001340">
        <id>P62508-3</id>
    </interactant>
    <interactant intactId="EBI-747278">
        <id>P26367</id>
        <label>PAX6</label>
    </interactant>
    <organismsDiffer>false</organismsDiffer>
    <experiments>3</experiments>
</comment>
<comment type="interaction">
    <interactant intactId="EBI-12001340">
        <id>P62508-3</id>
    </interactant>
    <interactant intactId="EBI-726549">
        <id>Q9NPJ4</id>
        <label>PNRC2</label>
    </interactant>
    <organismsDiffer>false</organismsDiffer>
    <experiments>3</experiments>
</comment>
<comment type="interaction">
    <interactant intactId="EBI-12001340">
        <id>P62508-3</id>
    </interactant>
    <interactant intactId="EBI-12219503">
        <id>P01189</id>
        <label>POMC</label>
    </interactant>
    <organismsDiffer>false</organismsDiffer>
    <experiments>3</experiments>
</comment>
<comment type="interaction">
    <interactant intactId="EBI-12001340">
        <id>P62508-3</id>
    </interactant>
    <interactant intactId="EBI-765486">
        <id>Q9UBK2</id>
        <label>PPARGC1A</label>
    </interactant>
    <organismsDiffer>false</organismsDiffer>
    <experiments>5</experiments>
</comment>
<comment type="interaction">
    <interactant intactId="EBI-12001340">
        <id>P62508-3</id>
    </interactant>
    <interactant intactId="EBI-357745">
        <id>P62195</id>
        <label>PSMC5</label>
    </interactant>
    <organismsDiffer>false</organismsDiffer>
    <experiments>5</experiments>
</comment>
<comment type="interaction">
    <interactant intactId="EBI-12001340">
        <id>P62508-3</id>
    </interactant>
    <interactant intactId="EBI-13380894">
        <id>Q8N0T1-2</id>
        <label>RBIS</label>
    </interactant>
    <organismsDiffer>false</organismsDiffer>
    <experiments>3</experiments>
</comment>
<comment type="interaction">
    <interactant intactId="EBI-12001340">
        <id>P62508-3</id>
    </interactant>
    <interactant intactId="EBI-10829018">
        <id>Q04864-2</id>
        <label>REL</label>
    </interactant>
    <organismsDiffer>false</organismsDiffer>
    <experiments>3</experiments>
</comment>
<comment type="interaction">
    <interactant intactId="EBI-12001340">
        <id>P62508-3</id>
    </interactant>
    <interactant intactId="EBI-726876">
        <id>Q6NUQ1</id>
        <label>RINT1</label>
    </interactant>
    <organismsDiffer>false</organismsDiffer>
    <experiments>3</experiments>
</comment>
<comment type="interaction">
    <interactant intactId="EBI-12001340">
        <id>P62508-3</id>
    </interactant>
    <interactant intactId="EBI-12097232">
        <id>A0MZ66-4</id>
        <label>SHTN1</label>
    </interactant>
    <organismsDiffer>false</organismsDiffer>
    <experiments>3</experiments>
</comment>
<comment type="interaction">
    <interactant intactId="EBI-12001340">
        <id>P62508-3</id>
    </interactant>
    <interactant intactId="EBI-749336">
        <id>Q8TAD8</id>
        <label>SNIP1</label>
    </interactant>
    <organismsDiffer>false</organismsDiffer>
    <experiments>3</experiments>
</comment>
<comment type="interaction">
    <interactant intactId="EBI-12001340">
        <id>P62508-3</id>
    </interactant>
    <interactant intactId="EBI-746692">
        <id>P19237</id>
        <label>TNNI1</label>
    </interactant>
    <organismsDiffer>false</organismsDiffer>
    <experiments>3</experiments>
</comment>
<comment type="interaction">
    <interactant intactId="EBI-12001340">
        <id>P62508-3</id>
    </interactant>
    <interactant intactId="EBI-7746394">
        <id>P48788</id>
        <label>TNNI2</label>
    </interactant>
    <organismsDiffer>false</organismsDiffer>
    <experiments>3</experiments>
</comment>
<comment type="interaction">
    <interactant intactId="EBI-12001340">
        <id>P62508-3</id>
    </interactant>
    <interactant intactId="EBI-3505166">
        <id>Q96PN7</id>
        <label>TRERF1</label>
    </interactant>
    <organismsDiffer>false</organismsDiffer>
    <experiments>3</experiments>
</comment>
<comment type="interaction">
    <interactant intactId="EBI-12001340">
        <id>P62508-3</id>
    </interactant>
    <interactant intactId="EBI-348604">
        <id>Q96S82</id>
        <label>UBL7</label>
    </interactant>
    <organismsDiffer>false</organismsDiffer>
    <experiments>3</experiments>
</comment>
<comment type="interaction">
    <interactant intactId="EBI-12001340">
        <id>P62508-3</id>
    </interactant>
    <interactant intactId="EBI-12227803">
        <id>Q5SQQ9-2</id>
        <label>VAX1</label>
    </interactant>
    <organismsDiffer>false</organismsDiffer>
    <experiments>3</experiments>
</comment>
<comment type="interaction">
    <interactant intactId="EBI-12001340">
        <id>P62508-3</id>
    </interactant>
    <interactant intactId="EBI-11962468">
        <id>Q7Z4V0</id>
        <label>ZNF438</label>
    </interactant>
    <organismsDiffer>false</organismsDiffer>
    <experiments>3</experiments>
</comment>
<comment type="subcellular location">
    <subcellularLocation>
        <location evidence="21">Nucleus</location>
    </subcellularLocation>
</comment>
<comment type="alternative products">
    <event type="alternative splicing"/>
    <isoform>
        <id>P62508-1</id>
        <id>O75454-1</id>
        <name>1</name>
        <name>Long</name>
        <sequence type="displayed"/>
    </isoform>
    <isoform>
        <id>P62508-2</id>
        <id>O75454-2</id>
        <name>2</name>
        <name>Short</name>
        <sequence type="described" ref="VSP_003702"/>
    </isoform>
    <isoform>
        <id>P62508-3</id>
        <name>3</name>
        <sequence type="described" ref="VSP_003702 VSP_013301"/>
    </isoform>
    <isoform>
        <id>P62508-4</id>
        <name>4</name>
        <sequence type="described" ref="VSP_003702 VSP_045980"/>
    </isoform>
    <isoform>
        <id>P62508-5</id>
        <name>5</name>
        <sequence type="described" ref="VSP_047156 VSP_013301"/>
    </isoform>
</comment>
<comment type="tissue specificity">
    <text evidence="6 14">Expressed in the heart, kidney, brain, lung, bone marrow, adrenal gland, trachea, spinal cord and thyroid gland.</text>
</comment>
<comment type="developmental stage">
    <text evidence="14">Expressed at high levels in fetal brain and also in the fetal kidney, lung and liver.</text>
</comment>
<comment type="PTM">
    <text evidence="12">Acetylated by PCAF/KAT2 (in vitro).</text>
</comment>
<comment type="PTM">
    <text evidence="8 10 11">Sumoylation on Lys-40 is enhanced by phosphorylation at Ser-45 and represses transcriptional activity.</text>
</comment>
<comment type="PTM">
    <text evidence="8 10 11">Phosphorylation on Ser-45 enhances sumoylation on Lys-40 thus repressing transcriptional activity.</text>
</comment>
<comment type="miscellaneous">
    <text>No physiological activating ligand is known for this orphan receptor, but 4-hydroxytamoxifen and diethylstilbestrol act as inverse agonists and deactivate ESRRG.</text>
</comment>
<comment type="similarity">
    <text evidence="21">Belongs to the nuclear hormone receptor family. NR3 subfamily.</text>
</comment>
<comment type="sequence caution" evidence="21">
    <conflict type="miscellaneous discrepancy">
        <sequence resource="EMBL-CDS" id="AAH08218"/>
    </conflict>
    <text>Contaminating sequence. Potential poly-A sequence.</text>
</comment>
<comment type="sequence caution" evidence="21">
    <conflict type="erroneous initiation">
        <sequence resource="EMBL-CDS" id="BAA74855"/>
    </conflict>
</comment>
<comment type="online information" name="Atlas of Genetics and Cytogenetics in Oncology and Haematology">
    <link uri="https://atlasgeneticsoncology.org/gene/45840/ESRRG"/>
</comment>
<accession>P62508</accession>
<accession>A8K4I0</accession>
<accession>A8K6I2</accession>
<accession>B3KY84</accession>
<accession>E9PGB7</accession>
<accession>F8W8J3</accession>
<accession>O75454</accession>
<accession>O96021</accession>
<accession>Q68DA0</accession>
<accession>Q6P274</accession>
<accession>Q6PK28</accession>
<accession>Q6TS38</accession>
<accession>Q9R1F3</accession>
<accession>Q9UNJ4</accession>
<name>ERR3_HUMAN</name>
<dbReference type="EMBL" id="AF094518">
    <property type="protein sequence ID" value="AAC99410.1"/>
    <property type="molecule type" value="mRNA"/>
</dbReference>
<dbReference type="EMBL" id="AB020639">
    <property type="protein sequence ID" value="BAA74855.2"/>
    <property type="status" value="ALT_INIT"/>
    <property type="molecule type" value="mRNA"/>
</dbReference>
<dbReference type="EMBL" id="AF058291">
    <property type="protein sequence ID" value="AAC39899.1"/>
    <property type="molecule type" value="mRNA"/>
</dbReference>
<dbReference type="EMBL" id="AY388456">
    <property type="protein sequence ID" value="AAQ93376.1"/>
    <property type="molecule type" value="mRNA"/>
</dbReference>
<dbReference type="EMBL" id="AY388457">
    <property type="protein sequence ID" value="AAQ93377.1"/>
    <property type="molecule type" value="mRNA"/>
</dbReference>
<dbReference type="EMBL" id="AY388458">
    <property type="protein sequence ID" value="AAQ93378.1"/>
    <property type="molecule type" value="mRNA"/>
</dbReference>
<dbReference type="EMBL" id="AY388459">
    <property type="protein sequence ID" value="AAQ93379.1"/>
    <property type="molecule type" value="mRNA"/>
</dbReference>
<dbReference type="EMBL" id="AY388460">
    <property type="protein sequence ID" value="AAQ93380.1"/>
    <property type="molecule type" value="mRNA"/>
</dbReference>
<dbReference type="EMBL" id="AY388461">
    <property type="protein sequence ID" value="AAQ93381.1"/>
    <property type="molecule type" value="mRNA"/>
</dbReference>
<dbReference type="EMBL" id="AK131193">
    <property type="protein sequence ID" value="BAG54746.1"/>
    <property type="molecule type" value="mRNA"/>
</dbReference>
<dbReference type="EMBL" id="AK290945">
    <property type="protein sequence ID" value="BAF83634.1"/>
    <property type="molecule type" value="mRNA"/>
</dbReference>
<dbReference type="EMBL" id="AK291028">
    <property type="protein sequence ID" value="BAF83717.1"/>
    <property type="molecule type" value="mRNA"/>
</dbReference>
<dbReference type="EMBL" id="AK291647">
    <property type="protein sequence ID" value="BAF84336.1"/>
    <property type="molecule type" value="mRNA"/>
</dbReference>
<dbReference type="EMBL" id="CR749497">
    <property type="protein sequence ID" value="CAH18320.1"/>
    <property type="molecule type" value="mRNA"/>
</dbReference>
<dbReference type="EMBL" id="AY528719">
    <property type="protein sequence ID" value="AAS00098.1"/>
    <property type="molecule type" value="Genomic_DNA"/>
</dbReference>
<dbReference type="EMBL" id="AC096635">
    <property type="status" value="NOT_ANNOTATED_CDS"/>
    <property type="molecule type" value="Genomic_DNA"/>
</dbReference>
<dbReference type="EMBL" id="AL445650">
    <property type="status" value="NOT_ANNOTATED_CDS"/>
    <property type="molecule type" value="Genomic_DNA"/>
</dbReference>
<dbReference type="EMBL" id="AL512650">
    <property type="status" value="NOT_ANNOTATED_CDS"/>
    <property type="molecule type" value="Genomic_DNA"/>
</dbReference>
<dbReference type="EMBL" id="AC096634">
    <property type="status" value="NOT_ANNOTATED_CDS"/>
    <property type="molecule type" value="Genomic_DNA"/>
</dbReference>
<dbReference type="EMBL" id="AL391216">
    <property type="status" value="NOT_ANNOTATED_CDS"/>
    <property type="molecule type" value="Genomic_DNA"/>
</dbReference>
<dbReference type="EMBL" id="AL512626">
    <property type="status" value="NOT_ANNOTATED_CDS"/>
    <property type="molecule type" value="Genomic_DNA"/>
</dbReference>
<dbReference type="EMBL" id="AL513312">
    <property type="status" value="NOT_ANNOTATED_CDS"/>
    <property type="molecule type" value="Genomic_DNA"/>
</dbReference>
<dbReference type="EMBL" id="AL603752">
    <property type="status" value="NOT_ANNOTATED_CDS"/>
    <property type="molecule type" value="Genomic_DNA"/>
</dbReference>
<dbReference type="EMBL" id="CH471100">
    <property type="protein sequence ID" value="EAW93335.1"/>
    <property type="molecule type" value="Genomic_DNA"/>
</dbReference>
<dbReference type="EMBL" id="BC008218">
    <property type="protein sequence ID" value="AAH08218.1"/>
    <property type="status" value="ALT_SEQ"/>
    <property type="molecule type" value="mRNA"/>
</dbReference>
<dbReference type="EMBL" id="BC064700">
    <property type="protein sequence ID" value="AAH64700.1"/>
    <property type="molecule type" value="mRNA"/>
</dbReference>
<dbReference type="EMBL" id="AF117255">
    <property type="protein sequence ID" value="AAD48370.1"/>
    <property type="molecule type" value="mRNA"/>
</dbReference>
<dbReference type="CCDS" id="CCDS1517.1">
    <molecule id="P62508-2"/>
</dbReference>
<dbReference type="CCDS" id="CCDS41468.1"/>
<dbReference type="CCDS" id="CCDS58060.1">
    <molecule id="P62508-4"/>
</dbReference>
<dbReference type="CCDS" id="CCDS58061.1">
    <molecule id="P62508-5"/>
</dbReference>
<dbReference type="RefSeq" id="NP_001127757.1">
    <molecule id="P62508-2"/>
    <property type="nucleotide sequence ID" value="NM_001134285.3"/>
</dbReference>
<dbReference type="RefSeq" id="NP_001230434.1">
    <property type="nucleotide sequence ID" value="NM_001243505.1"/>
</dbReference>
<dbReference type="RefSeq" id="NP_001230435.1">
    <property type="nucleotide sequence ID" value="NM_001243506.1"/>
</dbReference>
<dbReference type="RefSeq" id="NP_001230436.1">
    <molecule id="P62508-4"/>
    <property type="nucleotide sequence ID" value="NM_001243507.2"/>
</dbReference>
<dbReference type="RefSeq" id="NP_001230438.1">
    <molecule id="P62508-2"/>
    <property type="nucleotide sequence ID" value="NM_001243509.2"/>
</dbReference>
<dbReference type="RefSeq" id="NP_001230439.1">
    <molecule id="P62508-2"/>
    <property type="nucleotide sequence ID" value="NM_001243510.3"/>
</dbReference>
<dbReference type="RefSeq" id="NP_001230440.1">
    <molecule id="P62508-2"/>
    <property type="nucleotide sequence ID" value="NM_001243511.3"/>
</dbReference>
<dbReference type="RefSeq" id="NP_001230441.1">
    <molecule id="P62508-2"/>
    <property type="nucleotide sequence ID" value="NM_001243512.1"/>
</dbReference>
<dbReference type="RefSeq" id="NP_001230442.1">
    <molecule id="P62508-2"/>
    <property type="nucleotide sequence ID" value="NM_001243513.1"/>
</dbReference>
<dbReference type="RefSeq" id="NP_001230443.1">
    <molecule id="P62508-2"/>
    <property type="nucleotide sequence ID" value="NM_001243514.2"/>
</dbReference>
<dbReference type="RefSeq" id="NP_001230444.1">
    <molecule id="P62508-2"/>
    <property type="nucleotide sequence ID" value="NM_001243515.2"/>
</dbReference>
<dbReference type="RefSeq" id="NP_001230447.1">
    <molecule id="P62508-5"/>
    <property type="nucleotide sequence ID" value="NM_001243518.2"/>
</dbReference>
<dbReference type="RefSeq" id="NP_001230448.1">
    <molecule id="P62508-2"/>
    <property type="nucleotide sequence ID" value="NM_001243519.2"/>
</dbReference>
<dbReference type="RefSeq" id="NP_001337051.1">
    <molecule id="P62508-2"/>
    <property type="nucleotide sequence ID" value="NM_001350122.2"/>
</dbReference>
<dbReference type="RefSeq" id="NP_001337052.1">
    <molecule id="P62508-2"/>
    <property type="nucleotide sequence ID" value="NM_001350123.2"/>
</dbReference>
<dbReference type="RefSeq" id="NP_001337053.1">
    <molecule id="P62508-2"/>
    <property type="nucleotide sequence ID" value="NM_001350124.2"/>
</dbReference>
<dbReference type="RefSeq" id="NP_001337054.1">
    <molecule id="P62508-2"/>
    <property type="nucleotide sequence ID" value="NM_001350125.2"/>
</dbReference>
<dbReference type="RefSeq" id="NP_001429.2">
    <molecule id="P62508-1"/>
    <property type="nucleotide sequence ID" value="NM_001438.3"/>
</dbReference>
<dbReference type="RefSeq" id="NP_996317.1">
    <molecule id="P62508-2"/>
    <property type="nucleotide sequence ID" value="NM_206594.3"/>
</dbReference>
<dbReference type="RefSeq" id="NP_996318.1">
    <molecule id="P62508-2"/>
    <property type="nucleotide sequence ID" value="NM_206595.3"/>
</dbReference>
<dbReference type="RefSeq" id="XP_011507569.1">
    <molecule id="P62508-5"/>
    <property type="nucleotide sequence ID" value="XM_011509267.1"/>
</dbReference>
<dbReference type="RefSeq" id="XP_011507570.1">
    <molecule id="P62508-5"/>
    <property type="nucleotide sequence ID" value="XM_011509268.3"/>
</dbReference>
<dbReference type="RefSeq" id="XP_011507571.1">
    <molecule id="P62508-5"/>
    <property type="nucleotide sequence ID" value="XM_011509269.3"/>
</dbReference>
<dbReference type="RefSeq" id="XP_011507576.1">
    <property type="nucleotide sequence ID" value="XM_011509274.1"/>
</dbReference>
<dbReference type="RefSeq" id="XP_011507577.1">
    <property type="nucleotide sequence ID" value="XM_011509275.1"/>
</dbReference>
<dbReference type="RefSeq" id="XP_011507578.1">
    <property type="nucleotide sequence ID" value="XM_011509276.1"/>
</dbReference>
<dbReference type="RefSeq" id="XP_011507579.1">
    <property type="nucleotide sequence ID" value="XM_011509277.1"/>
</dbReference>
<dbReference type="RefSeq" id="XP_011507580.1">
    <property type="nucleotide sequence ID" value="XM_011509278.1"/>
</dbReference>
<dbReference type="RefSeq" id="XP_011507581.1">
    <property type="nucleotide sequence ID" value="XM_011509279.1"/>
</dbReference>
<dbReference type="RefSeq" id="XP_011507582.1">
    <property type="nucleotide sequence ID" value="XM_011509280.2"/>
</dbReference>
<dbReference type="RefSeq" id="XP_016856120.1">
    <molecule id="P62508-3"/>
    <property type="nucleotide sequence ID" value="XM_017000631.3"/>
</dbReference>
<dbReference type="RefSeq" id="XP_016856121.1">
    <molecule id="P62508-3"/>
    <property type="nucleotide sequence ID" value="XM_017000632.3"/>
</dbReference>
<dbReference type="RefSeq" id="XP_016856122.1">
    <property type="nucleotide sequence ID" value="XM_017000633.1"/>
</dbReference>
<dbReference type="RefSeq" id="XP_016856123.1">
    <molecule id="P62508-3"/>
    <property type="nucleotide sequence ID" value="XM_017000634.3"/>
</dbReference>
<dbReference type="RefSeq" id="XP_016856124.1">
    <property type="nucleotide sequence ID" value="XM_017000635.1"/>
</dbReference>
<dbReference type="RefSeq" id="XP_016856125.1">
    <molecule id="P62508-3"/>
    <property type="nucleotide sequence ID" value="XM_017000636.3"/>
</dbReference>
<dbReference type="RefSeq" id="XP_016856126.1">
    <molecule id="P62508-3"/>
    <property type="nucleotide sequence ID" value="XM_017000637.2"/>
</dbReference>
<dbReference type="RefSeq" id="XP_016856127.1">
    <property type="nucleotide sequence ID" value="XM_017000638.1"/>
</dbReference>
<dbReference type="RefSeq" id="XP_016856128.1">
    <property type="nucleotide sequence ID" value="XM_017000639.1"/>
</dbReference>
<dbReference type="RefSeq" id="XP_016856129.1">
    <property type="nucleotide sequence ID" value="XM_017000640.1"/>
</dbReference>
<dbReference type="RefSeq" id="XP_016856130.1">
    <property type="nucleotide sequence ID" value="XM_017000641.1"/>
</dbReference>
<dbReference type="RefSeq" id="XP_016856131.1">
    <property type="nucleotide sequence ID" value="XM_017000642.1"/>
</dbReference>
<dbReference type="RefSeq" id="XP_016856132.1">
    <property type="nucleotide sequence ID" value="XM_017000643.1"/>
</dbReference>
<dbReference type="RefSeq" id="XP_016856133.1">
    <property type="nucleotide sequence ID" value="XM_017000644.1"/>
</dbReference>
<dbReference type="RefSeq" id="XP_016856134.1">
    <property type="nucleotide sequence ID" value="XM_017000645.1"/>
</dbReference>
<dbReference type="RefSeq" id="XP_016856135.1">
    <property type="nucleotide sequence ID" value="XM_017000646.1"/>
</dbReference>
<dbReference type="RefSeq" id="XP_016856136.1">
    <property type="nucleotide sequence ID" value="XM_017000647.1"/>
</dbReference>
<dbReference type="RefSeq" id="XP_016856137.1">
    <property type="nucleotide sequence ID" value="XM_017000648.1"/>
</dbReference>
<dbReference type="RefSeq" id="XP_016856138.1">
    <property type="nucleotide sequence ID" value="XM_017000649.1"/>
</dbReference>
<dbReference type="RefSeq" id="XP_047305300.1">
    <molecule id="P62508-5"/>
    <property type="nucleotide sequence ID" value="XM_047449344.1"/>
</dbReference>
<dbReference type="RefSeq" id="XP_047305307.1">
    <molecule id="P62508-5"/>
    <property type="nucleotide sequence ID" value="XM_047449351.1"/>
</dbReference>
<dbReference type="RefSeq" id="XP_047305318.1">
    <molecule id="P62508-5"/>
    <property type="nucleotide sequence ID" value="XM_047449362.1"/>
</dbReference>
<dbReference type="RefSeq" id="XP_047305324.1">
    <molecule id="P62508-5"/>
    <property type="nucleotide sequence ID" value="XM_047449368.1"/>
</dbReference>
<dbReference type="RefSeq" id="XP_047305327.1">
    <molecule id="P62508-5"/>
    <property type="nucleotide sequence ID" value="XM_047449371.1"/>
</dbReference>
<dbReference type="RefSeq" id="XP_047305351.1">
    <molecule id="P62508-3"/>
    <property type="nucleotide sequence ID" value="XM_047449395.1"/>
</dbReference>
<dbReference type="RefSeq" id="XP_047305352.1">
    <molecule id="P62508-3"/>
    <property type="nucleotide sequence ID" value="XM_047449396.1"/>
</dbReference>
<dbReference type="RefSeq" id="XP_047305353.1">
    <molecule id="P62508-3"/>
    <property type="nucleotide sequence ID" value="XM_047449397.1"/>
</dbReference>
<dbReference type="RefSeq" id="XP_047305354.1">
    <molecule id="P62508-3"/>
    <property type="nucleotide sequence ID" value="XM_047449398.1"/>
</dbReference>
<dbReference type="RefSeq" id="XP_047305357.1">
    <molecule id="P62508-3"/>
    <property type="nucleotide sequence ID" value="XM_047449401.1"/>
</dbReference>
<dbReference type="RefSeq" id="XP_047305358.1">
    <molecule id="P62508-3"/>
    <property type="nucleotide sequence ID" value="XM_047449402.1"/>
</dbReference>
<dbReference type="RefSeq" id="XP_047305359.1">
    <molecule id="P62508-3"/>
    <property type="nucleotide sequence ID" value="XM_047449403.1"/>
</dbReference>
<dbReference type="RefSeq" id="XP_054191045.1">
    <molecule id="P62508-5"/>
    <property type="nucleotide sequence ID" value="XM_054335070.1"/>
</dbReference>
<dbReference type="RefSeq" id="XP_054191046.1">
    <molecule id="P62508-5"/>
    <property type="nucleotide sequence ID" value="XM_054335071.1"/>
</dbReference>
<dbReference type="RefSeq" id="XP_054191047.1">
    <molecule id="P62508-5"/>
    <property type="nucleotide sequence ID" value="XM_054335072.1"/>
</dbReference>
<dbReference type="RefSeq" id="XP_054191048.1">
    <molecule id="P62508-5"/>
    <property type="nucleotide sequence ID" value="XM_054335073.1"/>
</dbReference>
<dbReference type="RefSeq" id="XP_054191055.1">
    <molecule id="P62508-3"/>
    <property type="nucleotide sequence ID" value="XM_054335080.1"/>
</dbReference>
<dbReference type="RefSeq" id="XP_054191056.1">
    <molecule id="P62508-3"/>
    <property type="nucleotide sequence ID" value="XM_054335081.1"/>
</dbReference>
<dbReference type="RefSeq" id="XP_054191057.1">
    <molecule id="P62508-3"/>
    <property type="nucleotide sequence ID" value="XM_054335082.1"/>
</dbReference>
<dbReference type="RefSeq" id="XP_054191058.1">
    <molecule id="P62508-3"/>
    <property type="nucleotide sequence ID" value="XM_054335083.1"/>
</dbReference>
<dbReference type="RefSeq" id="XP_054191059.1">
    <molecule id="P62508-3"/>
    <property type="nucleotide sequence ID" value="XM_054335084.1"/>
</dbReference>
<dbReference type="RefSeq" id="XP_054191060.1">
    <molecule id="P62508-3"/>
    <property type="nucleotide sequence ID" value="XM_054335085.1"/>
</dbReference>
<dbReference type="RefSeq" id="XP_054191061.1">
    <molecule id="P62508-3"/>
    <property type="nucleotide sequence ID" value="XM_054335086.1"/>
</dbReference>
<dbReference type="RefSeq" id="XP_054191062.1">
    <molecule id="P62508-3"/>
    <property type="nucleotide sequence ID" value="XM_054335087.1"/>
</dbReference>
<dbReference type="RefSeq" id="XP_054191063.1">
    <molecule id="P62508-3"/>
    <property type="nucleotide sequence ID" value="XM_054335088.1"/>
</dbReference>
<dbReference type="RefSeq" id="XP_054191064.1">
    <molecule id="P62508-3"/>
    <property type="nucleotide sequence ID" value="XM_054335089.1"/>
</dbReference>
<dbReference type="RefSeq" id="XP_054191065.1">
    <molecule id="P62508-3"/>
    <property type="nucleotide sequence ID" value="XM_054335090.1"/>
</dbReference>
<dbReference type="RefSeq" id="XP_054191066.1">
    <molecule id="P62508-3"/>
    <property type="nucleotide sequence ID" value="XM_054335091.1"/>
</dbReference>
<dbReference type="RefSeq" id="XP_054191067.1">
    <molecule id="P62508-3"/>
    <property type="nucleotide sequence ID" value="XM_054335092.1"/>
</dbReference>
<dbReference type="PDB" id="1KV6">
    <property type="method" value="X-ray"/>
    <property type="resolution" value="2.70 A"/>
    <property type="chains" value="A/B=229-458"/>
</dbReference>
<dbReference type="PDB" id="1TFC">
    <property type="method" value="X-ray"/>
    <property type="resolution" value="2.40 A"/>
    <property type="chains" value="A/B=229-458"/>
</dbReference>
<dbReference type="PDB" id="1VJB">
    <property type="method" value="X-ray"/>
    <property type="resolution" value="3.20 A"/>
    <property type="chains" value="A/B=229-458"/>
</dbReference>
<dbReference type="PDB" id="2E2R">
    <property type="method" value="X-ray"/>
    <property type="resolution" value="1.60 A"/>
    <property type="chains" value="A=222-458"/>
</dbReference>
<dbReference type="PDB" id="2EWP">
    <property type="method" value="X-ray"/>
    <property type="resolution" value="2.30 A"/>
    <property type="chains" value="A/B/C/D/E=233-458"/>
</dbReference>
<dbReference type="PDB" id="2GP7">
    <property type="method" value="X-ray"/>
    <property type="resolution" value="2.45 A"/>
    <property type="chains" value="A/B/C/D=229-458"/>
</dbReference>
<dbReference type="PDB" id="2GPO">
    <property type="method" value="X-ray"/>
    <property type="resolution" value="1.95 A"/>
    <property type="chains" value="A=229-458"/>
</dbReference>
<dbReference type="PDB" id="2GPP">
    <property type="method" value="X-ray"/>
    <property type="resolution" value="2.60 A"/>
    <property type="chains" value="A/B=229-458"/>
</dbReference>
<dbReference type="PDB" id="2GPU">
    <property type="method" value="X-ray"/>
    <property type="resolution" value="1.70 A"/>
    <property type="chains" value="A=229-458"/>
</dbReference>
<dbReference type="PDB" id="2GPV">
    <property type="method" value="X-ray"/>
    <property type="resolution" value="2.85 A"/>
    <property type="chains" value="A/B/C/D/E/F=229-458"/>
</dbReference>
<dbReference type="PDB" id="2P7A">
    <property type="method" value="X-ray"/>
    <property type="resolution" value="2.30 A"/>
    <property type="chains" value="A=229-458"/>
</dbReference>
<dbReference type="PDB" id="2P7G">
    <property type="method" value="X-ray"/>
    <property type="resolution" value="2.10 A"/>
    <property type="chains" value="A=229-458"/>
</dbReference>
<dbReference type="PDB" id="2P7Z">
    <property type="method" value="X-ray"/>
    <property type="resolution" value="2.50 A"/>
    <property type="chains" value="A=229-458"/>
</dbReference>
<dbReference type="PDB" id="2ZAS">
    <property type="method" value="X-ray"/>
    <property type="resolution" value="2.00 A"/>
    <property type="chains" value="A=222-458"/>
</dbReference>
<dbReference type="PDB" id="2ZBS">
    <property type="method" value="X-ray"/>
    <property type="resolution" value="1.80 A"/>
    <property type="chains" value="A=222-458"/>
</dbReference>
<dbReference type="PDB" id="2ZKC">
    <property type="method" value="X-ray"/>
    <property type="resolution" value="1.70 A"/>
    <property type="chains" value="A=222-458"/>
</dbReference>
<dbReference type="PDB" id="5YSO">
    <property type="method" value="X-ray"/>
    <property type="resolution" value="2.50 A"/>
    <property type="chains" value="A/B/C=221-458"/>
</dbReference>
<dbReference type="PDB" id="6A6K">
    <property type="method" value="X-ray"/>
    <property type="resolution" value="2.90 A"/>
    <property type="chains" value="A/B/C=221-458"/>
</dbReference>
<dbReference type="PDB" id="6I61">
    <property type="method" value="X-ray"/>
    <property type="resolution" value="1.65 A"/>
    <property type="chains" value="A=222-458"/>
</dbReference>
<dbReference type="PDB" id="6I62">
    <property type="method" value="X-ray"/>
    <property type="resolution" value="1.65 A"/>
    <property type="chains" value="A=222-458"/>
</dbReference>
<dbReference type="PDB" id="6I63">
    <property type="method" value="X-ray"/>
    <property type="resolution" value="2.23 A"/>
    <property type="chains" value="A=222-458"/>
</dbReference>
<dbReference type="PDB" id="6I64">
    <property type="method" value="X-ray"/>
    <property type="resolution" value="1.91 A"/>
    <property type="chains" value="A=222-458"/>
</dbReference>
<dbReference type="PDB" id="6I65">
    <property type="method" value="X-ray"/>
    <property type="resolution" value="1.50 A"/>
    <property type="chains" value="A=222-458"/>
</dbReference>
<dbReference type="PDB" id="6I66">
    <property type="method" value="X-ray"/>
    <property type="resolution" value="1.60 A"/>
    <property type="chains" value="A=222-458"/>
</dbReference>
<dbReference type="PDB" id="6I67">
    <property type="method" value="X-ray"/>
    <property type="resolution" value="1.75 A"/>
    <property type="chains" value="A=222-458"/>
</dbReference>
<dbReference type="PDB" id="6K3N">
    <property type="method" value="X-ray"/>
    <property type="resolution" value="1.97 A"/>
    <property type="chains" value="A=232-458"/>
</dbReference>
<dbReference type="PDB" id="6KNR">
    <property type="method" value="X-ray"/>
    <property type="resolution" value="2.80 A"/>
    <property type="chains" value="A/B=222-458"/>
</dbReference>
<dbReference type="PDB" id="6XXC">
    <property type="method" value="X-ray"/>
    <property type="resolution" value="1.30 A"/>
    <property type="chains" value="B=174-182"/>
</dbReference>
<dbReference type="PDB" id="6XY5">
    <property type="method" value="X-ray"/>
    <property type="resolution" value="1.30 A"/>
    <property type="chains" value="B=174-182"/>
</dbReference>
<dbReference type="PDB" id="6Y18">
    <property type="method" value="X-ray"/>
    <property type="resolution" value="1.30 A"/>
    <property type="chains" value="B=174-182"/>
</dbReference>
<dbReference type="PDB" id="6Y1D">
    <property type="method" value="X-ray"/>
    <property type="resolution" value="1.38 A"/>
    <property type="chains" value="B=174-182"/>
</dbReference>
<dbReference type="PDB" id="6Y3W">
    <property type="method" value="X-ray"/>
    <property type="resolution" value="1.34 A"/>
    <property type="chains" value="B=174-182"/>
</dbReference>
<dbReference type="PDB" id="6Y58">
    <property type="method" value="X-ray"/>
    <property type="resolution" value="1.90 A"/>
    <property type="chains" value="P=314-321"/>
</dbReference>
<dbReference type="PDB" id="8B4Q">
    <property type="method" value="X-ray"/>
    <property type="resolution" value="1.40 A"/>
    <property type="chains" value="B=174-182"/>
</dbReference>
<dbReference type="PDB" id="8BJG">
    <property type="method" value="X-ray"/>
    <property type="resolution" value="1.40 A"/>
    <property type="chains" value="B=174-182"/>
</dbReference>
<dbReference type="PDB" id="8BJN">
    <property type="method" value="X-ray"/>
    <property type="resolution" value="1.40 A"/>
    <property type="chains" value="B=174-182"/>
</dbReference>
<dbReference type="PDB" id="8BM5">
    <property type="method" value="X-ray"/>
    <property type="resolution" value="1.40 A"/>
    <property type="chains" value="B=174-182"/>
</dbReference>
<dbReference type="PDB" id="8IFO">
    <property type="method" value="X-ray"/>
    <property type="resolution" value="2.20 A"/>
    <property type="chains" value="A/B/F=123-219"/>
</dbReference>
<dbReference type="PDBsum" id="1KV6"/>
<dbReference type="PDBsum" id="1TFC"/>
<dbReference type="PDBsum" id="1VJB"/>
<dbReference type="PDBsum" id="2E2R"/>
<dbReference type="PDBsum" id="2EWP"/>
<dbReference type="PDBsum" id="2GP7"/>
<dbReference type="PDBsum" id="2GPO"/>
<dbReference type="PDBsum" id="2GPP"/>
<dbReference type="PDBsum" id="2GPU"/>
<dbReference type="PDBsum" id="2GPV"/>
<dbReference type="PDBsum" id="2P7A"/>
<dbReference type="PDBsum" id="2P7G"/>
<dbReference type="PDBsum" id="2P7Z"/>
<dbReference type="PDBsum" id="2ZAS"/>
<dbReference type="PDBsum" id="2ZBS"/>
<dbReference type="PDBsum" id="2ZKC"/>
<dbReference type="PDBsum" id="5YSO"/>
<dbReference type="PDBsum" id="6A6K"/>
<dbReference type="PDBsum" id="6I61"/>
<dbReference type="PDBsum" id="6I62"/>
<dbReference type="PDBsum" id="6I63"/>
<dbReference type="PDBsum" id="6I64"/>
<dbReference type="PDBsum" id="6I65"/>
<dbReference type="PDBsum" id="6I66"/>
<dbReference type="PDBsum" id="6I67"/>
<dbReference type="PDBsum" id="6K3N"/>
<dbReference type="PDBsum" id="6KNR"/>
<dbReference type="PDBsum" id="6XXC"/>
<dbReference type="PDBsum" id="6XY5"/>
<dbReference type="PDBsum" id="6Y18"/>
<dbReference type="PDBsum" id="6Y1D"/>
<dbReference type="PDBsum" id="6Y3W"/>
<dbReference type="PDBsum" id="6Y58"/>
<dbReference type="PDBsum" id="8B4Q"/>
<dbReference type="PDBsum" id="8BJG"/>
<dbReference type="PDBsum" id="8BJN"/>
<dbReference type="PDBsum" id="8BM5"/>
<dbReference type="PDBsum" id="8IFO"/>
<dbReference type="SASBDB" id="P62508"/>
<dbReference type="SMR" id="P62508"/>
<dbReference type="BioGRID" id="108407">
    <property type="interactions" value="71"/>
</dbReference>
<dbReference type="FunCoup" id="P62508">
    <property type="interactions" value="2006"/>
</dbReference>
<dbReference type="IntAct" id="P62508">
    <property type="interactions" value="60"/>
</dbReference>
<dbReference type="MINT" id="P62508"/>
<dbReference type="STRING" id="9606.ENSP00000355904"/>
<dbReference type="BindingDB" id="P62508"/>
<dbReference type="ChEMBL" id="CHEMBL4245"/>
<dbReference type="DrugBank" id="DB06884">
    <property type="generic name" value="4-HYDROXY-N'-(4-ISOPROPYLBENZYL)BENZOHYDRAZIDE"/>
</dbReference>
<dbReference type="DrugBank" id="DB04468">
    <property type="generic name" value="Afimoxifene"/>
</dbReference>
<dbReference type="DrugBank" id="DB00288">
    <property type="generic name" value="Amcinonide"/>
</dbReference>
<dbReference type="DrugBank" id="DB00995">
    <property type="generic name" value="Auranofin"/>
</dbReference>
<dbReference type="DrugBank" id="DB06973">
    <property type="generic name" value="Bisphenol A"/>
</dbReference>
<dbReference type="DrugBank" id="DB07485">
    <property type="generic name" value="Bisphenol Z"/>
</dbReference>
<dbReference type="DrugBank" id="DB02659">
    <property type="generic name" value="Cholic Acid"/>
</dbReference>
<dbReference type="DrugBank" id="DB01380">
    <property type="generic name" value="Cortisone acetate"/>
</dbReference>
<dbReference type="DrugBank" id="DB01260">
    <property type="generic name" value="Desonide"/>
</dbReference>
<dbReference type="DrugBank" id="DB00547">
    <property type="generic name" value="Desoximetasone"/>
</dbReference>
<dbReference type="DrugBank" id="DB00255">
    <property type="generic name" value="Diethylstilbestrol"/>
</dbReference>
<dbReference type="DrugBank" id="DB13952">
    <property type="generic name" value="Estradiol acetate"/>
</dbReference>
<dbReference type="DrugBank" id="DB13953">
    <property type="generic name" value="Estradiol benzoate"/>
</dbReference>
<dbReference type="DrugBank" id="DB13954">
    <property type="generic name" value="Estradiol cypionate"/>
</dbReference>
<dbReference type="DrugBank" id="DB13955">
    <property type="generic name" value="Estradiol dienanthate"/>
</dbReference>
<dbReference type="DrugBank" id="DB13956">
    <property type="generic name" value="Estradiol valerate"/>
</dbReference>
<dbReference type="DrugBank" id="DB00663">
    <property type="generic name" value="Flumethasone"/>
</dbReference>
<dbReference type="DrugBank" id="DB01047">
    <property type="generic name" value="Fluocinonide"/>
</dbReference>
<dbReference type="DrugBank" id="DB00846">
    <property type="generic name" value="Flurandrenolide"/>
</dbReference>
<dbReference type="DrugBank" id="DB06786">
    <property type="generic name" value="Halcinonide"/>
</dbReference>
<dbReference type="DrugBank" id="DB14596">
    <property type="generic name" value="Loteprednol etabonate"/>
</dbReference>
<dbReference type="DrugBank" id="DB00253">
    <property type="generic name" value="Medrysone"/>
</dbReference>
<dbReference type="DrugBank" id="DB06902">
    <property type="generic name" value="p-Cumylphenol"/>
</dbReference>
<dbReference type="DrugBank" id="DB01130">
    <property type="generic name" value="Prednicarbate"/>
</dbReference>
<dbReference type="DrugBank" id="DB00675">
    <property type="generic name" value="Tamoxifen"/>
</dbReference>
<dbReference type="DrugBank" id="DB00197">
    <property type="generic name" value="Troglitazone"/>
</dbReference>
<dbReference type="DrugBank" id="DB00596">
    <property type="generic name" value="Ulobetasol"/>
</dbReference>
<dbReference type="DrugCentral" id="P62508"/>
<dbReference type="GuidetoPHARMACOLOGY" id="624"/>
<dbReference type="GlyGen" id="P62508">
    <property type="glycosylation" value="1 site"/>
</dbReference>
<dbReference type="iPTMnet" id="P62508"/>
<dbReference type="PhosphoSitePlus" id="P62508"/>
<dbReference type="BioMuta" id="ESRRG"/>
<dbReference type="DMDM" id="50402102"/>
<dbReference type="MassIVE" id="P62508"/>
<dbReference type="PaxDb" id="9606-ENSP00000355904"/>
<dbReference type="PeptideAtlas" id="P62508"/>
<dbReference type="ProteomicsDB" id="20283"/>
<dbReference type="ProteomicsDB" id="30159"/>
<dbReference type="ProteomicsDB" id="57405"/>
<dbReference type="ProteomicsDB" id="57406">
    <molecule id="P62508-2"/>
</dbReference>
<dbReference type="ProteomicsDB" id="57407">
    <molecule id="P62508-3"/>
</dbReference>
<dbReference type="Pumba" id="P62508"/>
<dbReference type="Antibodypedia" id="20728">
    <property type="antibodies" value="516 antibodies from 37 providers"/>
</dbReference>
<dbReference type="DNASU" id="2104"/>
<dbReference type="Ensembl" id="ENST00000359162.6">
    <molecule id="P62508-2"/>
    <property type="protein sequence ID" value="ENSP00000352077.2"/>
    <property type="gene ID" value="ENSG00000196482.18"/>
</dbReference>
<dbReference type="Ensembl" id="ENST00000360012.7">
    <molecule id="P62508-2"/>
    <property type="protein sequence ID" value="ENSP00000353108.3"/>
    <property type="gene ID" value="ENSG00000196482.18"/>
</dbReference>
<dbReference type="Ensembl" id="ENST00000361395.6">
    <molecule id="P62508-2"/>
    <property type="protein sequence ID" value="ENSP00000354584.2"/>
    <property type="gene ID" value="ENSG00000196482.18"/>
</dbReference>
<dbReference type="Ensembl" id="ENST00000361525.7">
    <molecule id="P62508-2"/>
    <property type="protein sequence ID" value="ENSP00000355225.3"/>
    <property type="gene ID" value="ENSG00000196482.18"/>
</dbReference>
<dbReference type="Ensembl" id="ENST00000366937.5">
    <molecule id="P62508-5"/>
    <property type="protein sequence ID" value="ENSP00000355904.1"/>
    <property type="gene ID" value="ENSG00000196482.18"/>
</dbReference>
<dbReference type="Ensembl" id="ENST00000366938.6">
    <molecule id="P62508-2"/>
    <property type="protein sequence ID" value="ENSP00000355905.2"/>
    <property type="gene ID" value="ENSG00000196482.18"/>
</dbReference>
<dbReference type="Ensembl" id="ENST00000366940.6">
    <molecule id="P62508-2"/>
    <property type="protein sequence ID" value="ENSP00000355907.2"/>
    <property type="gene ID" value="ENSG00000196482.18"/>
</dbReference>
<dbReference type="Ensembl" id="ENST00000391890.7">
    <molecule id="P62508-2"/>
    <property type="protein sequence ID" value="ENSP00000375761.4"/>
    <property type="gene ID" value="ENSG00000196482.18"/>
</dbReference>
<dbReference type="Ensembl" id="ENST00000408911.8">
    <molecule id="P62508-1"/>
    <property type="protein sequence ID" value="ENSP00000386171.3"/>
    <property type="gene ID" value="ENSG00000196482.18"/>
</dbReference>
<dbReference type="Ensembl" id="ENST00000463665.5">
    <molecule id="P62508-4"/>
    <property type="protein sequence ID" value="ENSP00000418629.1"/>
    <property type="gene ID" value="ENSG00000196482.18"/>
</dbReference>
<dbReference type="Ensembl" id="ENST00000487276.5">
    <molecule id="P62508-2"/>
    <property type="protein sequence ID" value="ENSP00000419155.1"/>
    <property type="gene ID" value="ENSG00000196482.18"/>
</dbReference>
<dbReference type="Ensembl" id="ENST00000493603.5">
    <molecule id="P62508-2"/>
    <property type="protein sequence ID" value="ENSP00000419594.1"/>
    <property type="gene ID" value="ENSG00000196482.18"/>
</dbReference>
<dbReference type="Ensembl" id="ENST00000493748.5">
    <molecule id="P62508-2"/>
    <property type="protein sequence ID" value="ENSP00000417374.1"/>
    <property type="gene ID" value="ENSG00000196482.18"/>
</dbReference>
<dbReference type="Ensembl" id="ENST00000616180.4">
    <molecule id="P62508-2"/>
    <property type="protein sequence ID" value="ENSP00000481528.1"/>
    <property type="gene ID" value="ENSG00000196482.18"/>
</dbReference>
<dbReference type="Ensembl" id="ENST00000673908.1">
    <molecule id="P62508-3"/>
    <property type="protein sequence ID" value="ENSP00000500992.1"/>
    <property type="gene ID" value="ENSG00000196482.18"/>
</dbReference>
<dbReference type="GeneID" id="2104"/>
<dbReference type="KEGG" id="hsa:2104"/>
<dbReference type="MANE-Select" id="ENST00000408911.8">
    <property type="protein sequence ID" value="ENSP00000386171.3"/>
    <property type="RefSeq nucleotide sequence ID" value="NM_001438.4"/>
    <property type="RefSeq protein sequence ID" value="NP_001429.2"/>
</dbReference>
<dbReference type="UCSC" id="uc001hkw.3">
    <property type="organism name" value="human"/>
</dbReference>
<dbReference type="AGR" id="HGNC:3474"/>
<dbReference type="CTD" id="2104"/>
<dbReference type="DisGeNET" id="2104"/>
<dbReference type="GeneCards" id="ESRRG"/>
<dbReference type="HGNC" id="HGNC:3474">
    <property type="gene designation" value="ESRRG"/>
</dbReference>
<dbReference type="HPA" id="ENSG00000196482">
    <property type="expression patterns" value="Tissue enhanced (kidney, parathyroid gland, retina, stomach)"/>
</dbReference>
<dbReference type="MalaCards" id="ESRRG"/>
<dbReference type="MIM" id="602969">
    <property type="type" value="gene"/>
</dbReference>
<dbReference type="neXtProt" id="NX_P62508"/>
<dbReference type="OpenTargets" id="ENSG00000196482"/>
<dbReference type="PharmGKB" id="PA27891"/>
<dbReference type="VEuPathDB" id="HostDB:ENSG00000196482"/>
<dbReference type="eggNOG" id="KOG3575">
    <property type="taxonomic scope" value="Eukaryota"/>
</dbReference>
<dbReference type="GeneTree" id="ENSGT00940000153433"/>
<dbReference type="InParanoid" id="P62508"/>
<dbReference type="OMA" id="KYRTMKL"/>
<dbReference type="OrthoDB" id="5799427at2759"/>
<dbReference type="PAN-GO" id="P62508">
    <property type="GO annotations" value="3 GO annotations based on evolutionary models"/>
</dbReference>
<dbReference type="PhylomeDB" id="P62508"/>
<dbReference type="TreeFam" id="TF323751"/>
<dbReference type="PathwayCommons" id="P62508"/>
<dbReference type="Reactome" id="R-HSA-383280">
    <property type="pathway name" value="Nuclear Receptor transcription pathway"/>
</dbReference>
<dbReference type="SignaLink" id="P62508"/>
<dbReference type="SIGNOR" id="P62508"/>
<dbReference type="BioGRID-ORCS" id="2104">
    <property type="hits" value="19 hits in 1183 CRISPR screens"/>
</dbReference>
<dbReference type="ChiTaRS" id="ESRRG">
    <property type="organism name" value="human"/>
</dbReference>
<dbReference type="EvolutionaryTrace" id="P62508"/>
<dbReference type="GeneWiki" id="Estrogen-related_receptor_gamma"/>
<dbReference type="GenomeRNAi" id="2104"/>
<dbReference type="Pharos" id="P62508">
    <property type="development level" value="Tchem"/>
</dbReference>
<dbReference type="PRO" id="PR:P62508"/>
<dbReference type="Proteomes" id="UP000005640">
    <property type="component" value="Chromosome 1"/>
</dbReference>
<dbReference type="RNAct" id="P62508">
    <property type="molecule type" value="protein"/>
</dbReference>
<dbReference type="Bgee" id="ENSG00000196482">
    <property type="expression patterns" value="Expressed in pons and 178 other cell types or tissues"/>
</dbReference>
<dbReference type="ExpressionAtlas" id="P62508">
    <property type="expression patterns" value="baseline and differential"/>
</dbReference>
<dbReference type="GO" id="GO:0000785">
    <property type="term" value="C:chromatin"/>
    <property type="evidence" value="ECO:0000247"/>
    <property type="project" value="NTNU_SB"/>
</dbReference>
<dbReference type="GO" id="GO:0005654">
    <property type="term" value="C:nucleoplasm"/>
    <property type="evidence" value="ECO:0000304"/>
    <property type="project" value="Reactome"/>
</dbReference>
<dbReference type="GO" id="GO:0005634">
    <property type="term" value="C:nucleus"/>
    <property type="evidence" value="ECO:0000318"/>
    <property type="project" value="GO_Central"/>
</dbReference>
<dbReference type="GO" id="GO:0050682">
    <property type="term" value="F:AF-2 domain binding"/>
    <property type="evidence" value="ECO:0000250"/>
    <property type="project" value="UniProtKB"/>
</dbReference>
<dbReference type="GO" id="GO:0001228">
    <property type="term" value="F:DNA-binding transcription activator activity, RNA polymerase II-specific"/>
    <property type="evidence" value="ECO:0007669"/>
    <property type="project" value="Ensembl"/>
</dbReference>
<dbReference type="GO" id="GO:0000981">
    <property type="term" value="F:DNA-binding transcription factor activity, RNA polymerase II-specific"/>
    <property type="evidence" value="ECO:0000247"/>
    <property type="project" value="NTNU_SB"/>
</dbReference>
<dbReference type="GO" id="GO:0034056">
    <property type="term" value="F:estrogen response element binding"/>
    <property type="evidence" value="ECO:0000318"/>
    <property type="project" value="GO_Central"/>
</dbReference>
<dbReference type="GO" id="GO:0042802">
    <property type="term" value="F:identical protein binding"/>
    <property type="evidence" value="ECO:0000353"/>
    <property type="project" value="IntAct"/>
</dbReference>
<dbReference type="GO" id="GO:0004879">
    <property type="term" value="F:nuclear receptor activity"/>
    <property type="evidence" value="ECO:0000318"/>
    <property type="project" value="GO_Central"/>
</dbReference>
<dbReference type="GO" id="GO:0003707">
    <property type="term" value="F:nuclear steroid receptor activity"/>
    <property type="evidence" value="ECO:0007669"/>
    <property type="project" value="InterPro"/>
</dbReference>
<dbReference type="GO" id="GO:1990837">
    <property type="term" value="F:sequence-specific double-stranded DNA binding"/>
    <property type="evidence" value="ECO:0000314"/>
    <property type="project" value="ARUK-UCL"/>
</dbReference>
<dbReference type="GO" id="GO:0005496">
    <property type="term" value="F:steroid binding"/>
    <property type="evidence" value="ECO:0007669"/>
    <property type="project" value="InterPro"/>
</dbReference>
<dbReference type="GO" id="GO:0008270">
    <property type="term" value="F:zinc ion binding"/>
    <property type="evidence" value="ECO:0007669"/>
    <property type="project" value="UniProtKB-KW"/>
</dbReference>
<dbReference type="GO" id="GO:0120162">
    <property type="term" value="P:positive regulation of cold-induced thermogenesis"/>
    <property type="evidence" value="ECO:0000250"/>
    <property type="project" value="YuBioLab"/>
</dbReference>
<dbReference type="GO" id="GO:0045944">
    <property type="term" value="P:positive regulation of transcription by RNA polymerase II"/>
    <property type="evidence" value="ECO:0000250"/>
    <property type="project" value="UniProtKB"/>
</dbReference>
<dbReference type="GO" id="GO:0006355">
    <property type="term" value="P:regulation of DNA-templated transcription"/>
    <property type="evidence" value="ECO:0000314"/>
    <property type="project" value="UniProtKB"/>
</dbReference>
<dbReference type="GO" id="GO:0006357">
    <property type="term" value="P:regulation of transcription by RNA polymerase II"/>
    <property type="evidence" value="ECO:0000318"/>
    <property type="project" value="GO_Central"/>
</dbReference>
<dbReference type="GO" id="GO:0048384">
    <property type="term" value="P:retinoic acid receptor signaling pathway"/>
    <property type="evidence" value="ECO:0007669"/>
    <property type="project" value="InterPro"/>
</dbReference>
<dbReference type="CDD" id="cd07170">
    <property type="entry name" value="NR_DBD_ERR"/>
    <property type="match status" value="1"/>
</dbReference>
<dbReference type="CDD" id="cd06946">
    <property type="entry name" value="NR_LBD_ERR"/>
    <property type="match status" value="1"/>
</dbReference>
<dbReference type="FunFam" id="1.10.565.10:FF:000009">
    <property type="entry name" value="estrogen-related receptor gamma isoform X1"/>
    <property type="match status" value="1"/>
</dbReference>
<dbReference type="FunFam" id="3.30.50.10:FF:000008">
    <property type="entry name" value="estrogen-related receptor gamma isoform X1"/>
    <property type="match status" value="1"/>
</dbReference>
<dbReference type="Gene3D" id="3.30.50.10">
    <property type="entry name" value="Erythroid Transcription Factor GATA-1, subunit A"/>
    <property type="match status" value="1"/>
</dbReference>
<dbReference type="Gene3D" id="1.10.565.10">
    <property type="entry name" value="Retinoid X Receptor"/>
    <property type="match status" value="1"/>
</dbReference>
<dbReference type="IDEAL" id="IID00057"/>
<dbReference type="InterPro" id="IPR024178">
    <property type="entry name" value="Est_rcpt/est-rel_rcp"/>
</dbReference>
<dbReference type="InterPro" id="IPR035500">
    <property type="entry name" value="NHR-like_dom_sf"/>
</dbReference>
<dbReference type="InterPro" id="IPR000536">
    <property type="entry name" value="Nucl_hrmn_rcpt_lig-bd"/>
</dbReference>
<dbReference type="InterPro" id="IPR050200">
    <property type="entry name" value="Nuclear_hormone_rcpt_NR3"/>
</dbReference>
<dbReference type="InterPro" id="IPR001723">
    <property type="entry name" value="Nuclear_hrmn_rcpt"/>
</dbReference>
<dbReference type="InterPro" id="IPR027289">
    <property type="entry name" value="Oest-rel_rcp"/>
</dbReference>
<dbReference type="InterPro" id="IPR003078">
    <property type="entry name" value="Retinoic_acid_rcpt"/>
</dbReference>
<dbReference type="InterPro" id="IPR001628">
    <property type="entry name" value="Znf_hrmn_rcpt"/>
</dbReference>
<dbReference type="InterPro" id="IPR013088">
    <property type="entry name" value="Znf_NHR/GATA"/>
</dbReference>
<dbReference type="PANTHER" id="PTHR48092">
    <property type="entry name" value="KNIRPS-RELATED PROTEIN-RELATED"/>
    <property type="match status" value="1"/>
</dbReference>
<dbReference type="Pfam" id="PF00104">
    <property type="entry name" value="Hormone_recep"/>
    <property type="match status" value="1"/>
</dbReference>
<dbReference type="Pfam" id="PF00105">
    <property type="entry name" value="zf-C4"/>
    <property type="match status" value="1"/>
</dbReference>
<dbReference type="PIRSF" id="PIRSF002527">
    <property type="entry name" value="ER-like_NR"/>
    <property type="match status" value="1"/>
</dbReference>
<dbReference type="PIRSF" id="PIRSF500939">
    <property type="entry name" value="ERR1-2-3"/>
    <property type="match status" value="1"/>
</dbReference>
<dbReference type="PRINTS" id="PR01292">
    <property type="entry name" value="RETNOICACIDR"/>
</dbReference>
<dbReference type="PRINTS" id="PR00398">
    <property type="entry name" value="STRDHORMONER"/>
</dbReference>
<dbReference type="PRINTS" id="PR00047">
    <property type="entry name" value="STROIDFINGER"/>
</dbReference>
<dbReference type="SMART" id="SM00430">
    <property type="entry name" value="HOLI"/>
    <property type="match status" value="1"/>
</dbReference>
<dbReference type="SMART" id="SM00399">
    <property type="entry name" value="ZnF_C4"/>
    <property type="match status" value="1"/>
</dbReference>
<dbReference type="SUPFAM" id="SSF57716">
    <property type="entry name" value="Glucocorticoid receptor-like (DNA-binding domain)"/>
    <property type="match status" value="1"/>
</dbReference>
<dbReference type="SUPFAM" id="SSF48508">
    <property type="entry name" value="Nuclear receptor ligand-binding domain"/>
    <property type="match status" value="1"/>
</dbReference>
<dbReference type="PROSITE" id="PS51843">
    <property type="entry name" value="NR_LBD"/>
    <property type="match status" value="1"/>
</dbReference>
<dbReference type="PROSITE" id="PS00031">
    <property type="entry name" value="NUCLEAR_REC_DBD_1"/>
    <property type="match status" value="1"/>
</dbReference>
<dbReference type="PROSITE" id="PS51030">
    <property type="entry name" value="NUCLEAR_REC_DBD_2"/>
    <property type="match status" value="1"/>
</dbReference>
<reference key="1">
    <citation type="journal article" date="1999" name="Gene">
        <title>Identification of two hERR2-related novel nuclear receptors utilizing bioinformatics and inverse PCR.</title>
        <authorList>
            <person name="Chen F."/>
            <person name="Zhang Q."/>
            <person name="McDonald T."/>
            <person name="Davidoff M.J."/>
            <person name="Bailey W."/>
            <person name="Bai C."/>
            <person name="Liu Q."/>
            <person name="Caskey C.T."/>
        </authorList>
    </citation>
    <scope>NUCLEOTIDE SEQUENCE [MRNA] (ISOFORM 1)</scope>
    <source>
        <tissue>Brain</tissue>
    </source>
</reference>
<reference key="2">
    <citation type="journal article" date="1998" name="DNA Res.">
        <title>Prediction of the coding sequences of unidentified human genes. XII. The complete sequences of 100 new cDNA clones from brain which code for large proteins in vitro.</title>
        <authorList>
            <person name="Nagase T."/>
            <person name="Ishikawa K."/>
            <person name="Suyama M."/>
            <person name="Kikuno R."/>
            <person name="Hirosawa M."/>
            <person name="Miyajima N."/>
            <person name="Tanaka A."/>
            <person name="Kotani H."/>
            <person name="Nomura N."/>
            <person name="Ohara O."/>
        </authorList>
    </citation>
    <scope>NUCLEOTIDE SEQUENCE [LARGE SCALE MRNA] (ISOFORM 1)</scope>
    <source>
        <tissue>Brain</tissue>
    </source>
</reference>
<reference key="3">
    <citation type="journal article" date="1998" name="Genomics">
        <title>Isolation of a gene encoding a novel member of the nuclear receptor superfamily from the critical region of Usher syndrome type IIa at 1q41.</title>
        <authorList>
            <person name="Eudy J.D."/>
            <person name="Yao S.F."/>
            <person name="Weston M.D."/>
            <person name="Ma-Edmonds M."/>
            <person name="Talmadge C.B."/>
            <person name="Cheng J.J."/>
            <person name="Kimberling W.J."/>
            <person name="Sumegi J."/>
        </authorList>
    </citation>
    <scope>NUCLEOTIDE SEQUENCE [MRNA] (ISOFORM 2)</scope>
    <scope>TISSUE SPECIFICITY</scope>
    <scope>DEVELOPMENTAL STAGE</scope>
</reference>
<reference key="4">
    <citation type="journal article" date="2000" name="Mol. Endocrinol.">
        <title>Human ERRgamma, a third member of the estrogen receptor-related receptor (ERR) subfamily of orphan nuclear receptors: tissue-specific isoforms are expressed during development and in the adult.</title>
        <authorList>
            <person name="Heard D.J."/>
            <person name="Norby P.L."/>
            <person name="Holloway J."/>
            <person name="Vissing H."/>
        </authorList>
    </citation>
    <scope>NUCLEOTIDE SEQUENCE [MRNA] (ISOFORMS 1 AND 2)</scope>
    <source>
        <tissue>Kidney</tissue>
        <tissue>Retina</tissue>
        <tissue>Skeletal muscle</tissue>
    </source>
</reference>
<reference key="5">
    <citation type="journal article" date="2004" name="Nat. Genet.">
        <title>Complete sequencing and characterization of 21,243 full-length human cDNAs.</title>
        <authorList>
            <person name="Ota T."/>
            <person name="Suzuki Y."/>
            <person name="Nishikawa T."/>
            <person name="Otsuki T."/>
            <person name="Sugiyama T."/>
            <person name="Irie R."/>
            <person name="Wakamatsu A."/>
            <person name="Hayashi K."/>
            <person name="Sato H."/>
            <person name="Nagai K."/>
            <person name="Kimura K."/>
            <person name="Makita H."/>
            <person name="Sekine M."/>
            <person name="Obayashi M."/>
            <person name="Nishi T."/>
            <person name="Shibahara T."/>
            <person name="Tanaka T."/>
            <person name="Ishii S."/>
            <person name="Yamamoto J."/>
            <person name="Saito K."/>
            <person name="Kawai Y."/>
            <person name="Isono Y."/>
            <person name="Nakamura Y."/>
            <person name="Nagahari K."/>
            <person name="Murakami K."/>
            <person name="Yasuda T."/>
            <person name="Iwayanagi T."/>
            <person name="Wagatsuma M."/>
            <person name="Shiratori A."/>
            <person name="Sudo H."/>
            <person name="Hosoiri T."/>
            <person name="Kaku Y."/>
            <person name="Kodaira H."/>
            <person name="Kondo H."/>
            <person name="Sugawara M."/>
            <person name="Takahashi M."/>
            <person name="Kanda K."/>
            <person name="Yokoi T."/>
            <person name="Furuya T."/>
            <person name="Kikkawa E."/>
            <person name="Omura Y."/>
            <person name="Abe K."/>
            <person name="Kamihara K."/>
            <person name="Katsuta N."/>
            <person name="Sato K."/>
            <person name="Tanikawa M."/>
            <person name="Yamazaki M."/>
            <person name="Ninomiya K."/>
            <person name="Ishibashi T."/>
            <person name="Yamashita H."/>
            <person name="Murakawa K."/>
            <person name="Fujimori K."/>
            <person name="Tanai H."/>
            <person name="Kimata M."/>
            <person name="Watanabe M."/>
            <person name="Hiraoka S."/>
            <person name="Chiba Y."/>
            <person name="Ishida S."/>
            <person name="Ono Y."/>
            <person name="Takiguchi S."/>
            <person name="Watanabe S."/>
            <person name="Yosida M."/>
            <person name="Hotuta T."/>
            <person name="Kusano J."/>
            <person name="Kanehori K."/>
            <person name="Takahashi-Fujii A."/>
            <person name="Hara H."/>
            <person name="Tanase T.-O."/>
            <person name="Nomura Y."/>
            <person name="Togiya S."/>
            <person name="Komai F."/>
            <person name="Hara R."/>
            <person name="Takeuchi K."/>
            <person name="Arita M."/>
            <person name="Imose N."/>
            <person name="Musashino K."/>
            <person name="Yuuki H."/>
            <person name="Oshima A."/>
            <person name="Sasaki N."/>
            <person name="Aotsuka S."/>
            <person name="Yoshikawa Y."/>
            <person name="Matsunawa H."/>
            <person name="Ichihara T."/>
            <person name="Shiohata N."/>
            <person name="Sano S."/>
            <person name="Moriya S."/>
            <person name="Momiyama H."/>
            <person name="Satoh N."/>
            <person name="Takami S."/>
            <person name="Terashima Y."/>
            <person name="Suzuki O."/>
            <person name="Nakagawa S."/>
            <person name="Senoh A."/>
            <person name="Mizoguchi H."/>
            <person name="Goto Y."/>
            <person name="Shimizu F."/>
            <person name="Wakebe H."/>
            <person name="Hishigaki H."/>
            <person name="Watanabe T."/>
            <person name="Sugiyama A."/>
            <person name="Takemoto M."/>
            <person name="Kawakami B."/>
            <person name="Yamazaki M."/>
            <person name="Watanabe K."/>
            <person name="Kumagai A."/>
            <person name="Itakura S."/>
            <person name="Fukuzumi Y."/>
            <person name="Fujimori Y."/>
            <person name="Komiyama M."/>
            <person name="Tashiro H."/>
            <person name="Tanigami A."/>
            <person name="Fujiwara T."/>
            <person name="Ono T."/>
            <person name="Yamada K."/>
            <person name="Fujii Y."/>
            <person name="Ozaki K."/>
            <person name="Hirao M."/>
            <person name="Ohmori Y."/>
            <person name="Kawabata A."/>
            <person name="Hikiji T."/>
            <person name="Kobatake N."/>
            <person name="Inagaki H."/>
            <person name="Ikema Y."/>
            <person name="Okamoto S."/>
            <person name="Okitani R."/>
            <person name="Kawakami T."/>
            <person name="Noguchi S."/>
            <person name="Itoh T."/>
            <person name="Shigeta K."/>
            <person name="Senba T."/>
            <person name="Matsumura K."/>
            <person name="Nakajima Y."/>
            <person name="Mizuno T."/>
            <person name="Morinaga M."/>
            <person name="Sasaki M."/>
            <person name="Togashi T."/>
            <person name="Oyama M."/>
            <person name="Hata H."/>
            <person name="Watanabe M."/>
            <person name="Komatsu T."/>
            <person name="Mizushima-Sugano J."/>
            <person name="Satoh T."/>
            <person name="Shirai Y."/>
            <person name="Takahashi Y."/>
            <person name="Nakagawa K."/>
            <person name="Okumura K."/>
            <person name="Nagase T."/>
            <person name="Nomura N."/>
            <person name="Kikuchi H."/>
            <person name="Masuho Y."/>
            <person name="Yamashita R."/>
            <person name="Nakai K."/>
            <person name="Yada T."/>
            <person name="Nakamura Y."/>
            <person name="Ohara O."/>
            <person name="Isogai T."/>
            <person name="Sugano S."/>
        </authorList>
    </citation>
    <scope>NUCLEOTIDE SEQUENCE [LARGE SCALE MRNA] (ISOFORMS 1; 2 AND 4)</scope>
    <source>
        <tissue>Brain</tissue>
        <tissue>Placenta</tissue>
    </source>
</reference>
<reference key="6">
    <citation type="journal article" date="2007" name="BMC Genomics">
        <title>The full-ORF clone resource of the German cDNA consortium.</title>
        <authorList>
            <person name="Bechtel S."/>
            <person name="Rosenfelder H."/>
            <person name="Duda A."/>
            <person name="Schmidt C.P."/>
            <person name="Ernst U."/>
            <person name="Wellenreuther R."/>
            <person name="Mehrle A."/>
            <person name="Schuster C."/>
            <person name="Bahr A."/>
            <person name="Bloecker H."/>
            <person name="Heubner D."/>
            <person name="Hoerlein A."/>
            <person name="Michel G."/>
            <person name="Wedler H."/>
            <person name="Koehrer K."/>
            <person name="Ottenwaelder B."/>
            <person name="Poustka A."/>
            <person name="Wiemann S."/>
            <person name="Schupp I."/>
        </authorList>
    </citation>
    <scope>NUCLEOTIDE SEQUENCE [LARGE SCALE MRNA] (ISOFORM 2)</scope>
    <source>
        <tissue>Fetal kidney</tissue>
    </source>
</reference>
<reference key="7">
    <citation type="submission" date="2004-01" db="EMBL/GenBank/DDBJ databases">
        <authorList>
            <consortium name="NIEHS SNPs program"/>
        </authorList>
    </citation>
    <scope>NUCLEOTIDE SEQUENCE [GENOMIC DNA]</scope>
    <scope>VARIANT MET-50</scope>
</reference>
<reference key="8">
    <citation type="journal article" date="2006" name="Nature">
        <title>The DNA sequence and biological annotation of human chromosome 1.</title>
        <authorList>
            <person name="Gregory S.G."/>
            <person name="Barlow K.F."/>
            <person name="McLay K.E."/>
            <person name="Kaul R."/>
            <person name="Swarbreck D."/>
            <person name="Dunham A."/>
            <person name="Scott C.E."/>
            <person name="Howe K.L."/>
            <person name="Woodfine K."/>
            <person name="Spencer C.C.A."/>
            <person name="Jones M.C."/>
            <person name="Gillson C."/>
            <person name="Searle S."/>
            <person name="Zhou Y."/>
            <person name="Kokocinski F."/>
            <person name="McDonald L."/>
            <person name="Evans R."/>
            <person name="Phillips K."/>
            <person name="Atkinson A."/>
            <person name="Cooper R."/>
            <person name="Jones C."/>
            <person name="Hall R.E."/>
            <person name="Andrews T.D."/>
            <person name="Lloyd C."/>
            <person name="Ainscough R."/>
            <person name="Almeida J.P."/>
            <person name="Ambrose K.D."/>
            <person name="Anderson F."/>
            <person name="Andrew R.W."/>
            <person name="Ashwell R.I.S."/>
            <person name="Aubin K."/>
            <person name="Babbage A.K."/>
            <person name="Bagguley C.L."/>
            <person name="Bailey J."/>
            <person name="Beasley H."/>
            <person name="Bethel G."/>
            <person name="Bird C.P."/>
            <person name="Bray-Allen S."/>
            <person name="Brown J.Y."/>
            <person name="Brown A.J."/>
            <person name="Buckley D."/>
            <person name="Burton J."/>
            <person name="Bye J."/>
            <person name="Carder C."/>
            <person name="Chapman J.C."/>
            <person name="Clark S.Y."/>
            <person name="Clarke G."/>
            <person name="Clee C."/>
            <person name="Cobley V."/>
            <person name="Collier R.E."/>
            <person name="Corby N."/>
            <person name="Coville G.J."/>
            <person name="Davies J."/>
            <person name="Deadman R."/>
            <person name="Dunn M."/>
            <person name="Earthrowl M."/>
            <person name="Ellington A.G."/>
            <person name="Errington H."/>
            <person name="Frankish A."/>
            <person name="Frankland J."/>
            <person name="French L."/>
            <person name="Garner P."/>
            <person name="Garnett J."/>
            <person name="Gay L."/>
            <person name="Ghori M.R.J."/>
            <person name="Gibson R."/>
            <person name="Gilby L.M."/>
            <person name="Gillett W."/>
            <person name="Glithero R.J."/>
            <person name="Grafham D.V."/>
            <person name="Griffiths C."/>
            <person name="Griffiths-Jones S."/>
            <person name="Grocock R."/>
            <person name="Hammond S."/>
            <person name="Harrison E.S.I."/>
            <person name="Hart E."/>
            <person name="Haugen E."/>
            <person name="Heath P.D."/>
            <person name="Holmes S."/>
            <person name="Holt K."/>
            <person name="Howden P.J."/>
            <person name="Hunt A.R."/>
            <person name="Hunt S.E."/>
            <person name="Hunter G."/>
            <person name="Isherwood J."/>
            <person name="James R."/>
            <person name="Johnson C."/>
            <person name="Johnson D."/>
            <person name="Joy A."/>
            <person name="Kay M."/>
            <person name="Kershaw J.K."/>
            <person name="Kibukawa M."/>
            <person name="Kimberley A.M."/>
            <person name="King A."/>
            <person name="Knights A.J."/>
            <person name="Lad H."/>
            <person name="Laird G."/>
            <person name="Lawlor S."/>
            <person name="Leongamornlert D.A."/>
            <person name="Lloyd D.M."/>
            <person name="Loveland J."/>
            <person name="Lovell J."/>
            <person name="Lush M.J."/>
            <person name="Lyne R."/>
            <person name="Martin S."/>
            <person name="Mashreghi-Mohammadi M."/>
            <person name="Matthews L."/>
            <person name="Matthews N.S.W."/>
            <person name="McLaren S."/>
            <person name="Milne S."/>
            <person name="Mistry S."/>
            <person name="Moore M.J.F."/>
            <person name="Nickerson T."/>
            <person name="O'Dell C.N."/>
            <person name="Oliver K."/>
            <person name="Palmeiri A."/>
            <person name="Palmer S.A."/>
            <person name="Parker A."/>
            <person name="Patel D."/>
            <person name="Pearce A.V."/>
            <person name="Peck A.I."/>
            <person name="Pelan S."/>
            <person name="Phelps K."/>
            <person name="Phillimore B.J."/>
            <person name="Plumb R."/>
            <person name="Rajan J."/>
            <person name="Raymond C."/>
            <person name="Rouse G."/>
            <person name="Saenphimmachak C."/>
            <person name="Sehra H.K."/>
            <person name="Sheridan E."/>
            <person name="Shownkeen R."/>
            <person name="Sims S."/>
            <person name="Skuce C.D."/>
            <person name="Smith M."/>
            <person name="Steward C."/>
            <person name="Subramanian S."/>
            <person name="Sycamore N."/>
            <person name="Tracey A."/>
            <person name="Tromans A."/>
            <person name="Van Helmond Z."/>
            <person name="Wall M."/>
            <person name="Wallis J.M."/>
            <person name="White S."/>
            <person name="Whitehead S.L."/>
            <person name="Wilkinson J.E."/>
            <person name="Willey D.L."/>
            <person name="Williams H."/>
            <person name="Wilming L."/>
            <person name="Wray P.W."/>
            <person name="Wu Z."/>
            <person name="Coulson A."/>
            <person name="Vaudin M."/>
            <person name="Sulston J.E."/>
            <person name="Durbin R.M."/>
            <person name="Hubbard T."/>
            <person name="Wooster R."/>
            <person name="Dunham I."/>
            <person name="Carter N.P."/>
            <person name="McVean G."/>
            <person name="Ross M.T."/>
            <person name="Harrow J."/>
            <person name="Olson M.V."/>
            <person name="Beck S."/>
            <person name="Rogers J."/>
            <person name="Bentley D.R."/>
        </authorList>
    </citation>
    <scope>NUCLEOTIDE SEQUENCE [LARGE SCALE GENOMIC DNA]</scope>
</reference>
<reference key="9">
    <citation type="submission" date="2005-09" db="EMBL/GenBank/DDBJ databases">
        <authorList>
            <person name="Mural R.J."/>
            <person name="Istrail S."/>
            <person name="Sutton G.G."/>
            <person name="Florea L."/>
            <person name="Halpern A.L."/>
            <person name="Mobarry C.M."/>
            <person name="Lippert R."/>
            <person name="Walenz B."/>
            <person name="Shatkay H."/>
            <person name="Dew I."/>
            <person name="Miller J.R."/>
            <person name="Flanigan M.J."/>
            <person name="Edwards N.J."/>
            <person name="Bolanos R."/>
            <person name="Fasulo D."/>
            <person name="Halldorsson B.V."/>
            <person name="Hannenhalli S."/>
            <person name="Turner R."/>
            <person name="Yooseph S."/>
            <person name="Lu F."/>
            <person name="Nusskern D.R."/>
            <person name="Shue B.C."/>
            <person name="Zheng X.H."/>
            <person name="Zhong F."/>
            <person name="Delcher A.L."/>
            <person name="Huson D.H."/>
            <person name="Kravitz S.A."/>
            <person name="Mouchard L."/>
            <person name="Reinert K."/>
            <person name="Remington K.A."/>
            <person name="Clark A.G."/>
            <person name="Waterman M.S."/>
            <person name="Eichler E.E."/>
            <person name="Adams M.D."/>
            <person name="Hunkapiller M.W."/>
            <person name="Myers E.W."/>
            <person name="Venter J.C."/>
        </authorList>
    </citation>
    <scope>NUCLEOTIDE SEQUENCE [LARGE SCALE GENOMIC DNA]</scope>
</reference>
<reference key="10">
    <citation type="journal article" date="2004" name="Genome Res.">
        <title>The status, quality, and expansion of the NIH full-length cDNA project: the Mammalian Gene Collection (MGC).</title>
        <authorList>
            <consortium name="The MGC Project Team"/>
        </authorList>
    </citation>
    <scope>NUCLEOTIDE SEQUENCE [LARGE SCALE MRNA] (ISOFORMS 2 AND 3)</scope>
    <source>
        <tissue>Eye</tissue>
        <tissue>Placenta</tissue>
    </source>
</reference>
<reference key="11">
    <citation type="journal article" date="1999" name="J. Biol. Chem.">
        <title>Hormone-independent transcriptional activation and coactivator binding by novel orphan nuclear receptor ERR3.</title>
        <authorList>
            <person name="Hong H."/>
            <person name="Yang L."/>
            <person name="Stallcup M.R."/>
        </authorList>
    </citation>
    <scope>NUCLEOTIDE SEQUENCE [MRNA] OF 1-129 (ISOFORM 1)</scope>
    <source>
        <tissue>Brain</tissue>
    </source>
</reference>
<reference key="12">
    <citation type="journal article" date="2003" name="Biochem. Biophys. Res. Commun.">
        <title>Identification of PNRC2 and TLE1 as activation function-1 cofactors of the orphan nuclear receptor ERRgamma.</title>
        <authorList>
            <person name="Hentschke M."/>
            <person name="Borgmeyer U."/>
        </authorList>
    </citation>
    <scope>INTERACTION WITH TLE1 AND PNRC2</scope>
    <scope>TISSUE SPECIFICITY</scope>
</reference>
<reference key="13">
    <citation type="journal article" date="2006" name="Proc. Natl. Acad. Sci. U.S.A.">
        <title>PDSM, a motif for phosphorylation-dependent SUMO modification.</title>
        <authorList>
            <person name="Hietakangas V."/>
            <person name="Anckar J."/>
            <person name="Blomster H.A."/>
            <person name="Fujimoto M."/>
            <person name="Palvimo J.J."/>
            <person name="Nakai A."/>
            <person name="Sistonen L."/>
        </authorList>
    </citation>
    <scope>SUMOYLATION AT LYS-40</scope>
    <scope>MUTAGENESIS OF LYS-40</scope>
</reference>
<reference key="14">
    <citation type="journal article" date="2009" name="Biochem. J.">
        <title>Transcriptional ERRgamma2-mediated activation is regulated by sentrin-specific proteases.</title>
        <authorList>
            <person name="Hentschke M."/>
            <person name="Suesens U."/>
            <person name="Borgmeyer U."/>
        </authorList>
    </citation>
    <scope>SUMOYLATION AT LYS-40</scope>
    <scope>PHOSPHORYLATION AT SER-45</scope>
    <scope>FUNCTION</scope>
    <scope>MUTAGENESIS OF PHE-38; ILE-39; LYS-40; THR-41; GLU-42; SER-44 AND SER-45</scope>
</reference>
<reference key="15">
    <citation type="journal article" date="2008" name="Mol. Endocrinol.">
        <title>Phosphorylation-dependent sumoylation regulates estrogen-related receptor-alpha and -gamma transcriptional activity through a synergy control motif.</title>
        <authorList>
            <person name="Tremblay A.M."/>
            <person name="Wilson B.J."/>
            <person name="Yang X.-J."/>
            <person name="Giguere V."/>
        </authorList>
    </citation>
    <scope>SUMOYLATION AT LYS-40</scope>
    <scope>PHOSPHORYLATION AT SER-45</scope>
    <scope>FUNCTION</scope>
    <scope>MUTAGENESIS OF LYS-40 AND SER-45</scope>
</reference>
<reference key="16">
    <citation type="journal article" date="2010" name="Mol. Endocrinol.">
        <title>An acetylation switch modulates the transcriptional activity of estrogen-related receptor alpha.</title>
        <authorList>
            <person name="Wilson B.J."/>
            <person name="Tremblay A.M."/>
            <person name="Deblois G."/>
            <person name="Sylvain-Drolet G."/>
            <person name="Giguere V."/>
        </authorList>
    </citation>
    <scope>ACETYLATION BY PCAF/KAT2B</scope>
</reference>
<reference key="17">
    <citation type="journal article" date="2013" name="J. Biol. Chem.">
        <title>Peroxisome proliferator-activated receptor gamma coactivator 1 (PGC-1)- and estrogen-related receptor (ERR)-induced regulator in muscle 1 (Perm1) is a tissue-specific regulator of oxidative capacity in skeletal muscle cells.</title>
        <authorList>
            <person name="Cho Y."/>
            <person name="Hazen B.C."/>
            <person name="Russell A.P."/>
            <person name="Kralli A."/>
        </authorList>
    </citation>
    <scope>FUNCTION</scope>
</reference>
<reference key="18">
    <citation type="journal article" date="2002" name="Mol. Cell">
        <title>Structural and functional evidence for ligand-independent transcriptional activation by the estrogen-related receptor 3.</title>
        <authorList>
            <person name="Greschik H."/>
            <person name="Wurtz J.-M."/>
            <person name="Sanglier S."/>
            <person name="Bourguet W."/>
            <person name="van Dorsselaer A."/>
            <person name="Moras D."/>
            <person name="Renaud J.-P."/>
        </authorList>
    </citation>
    <scope>X-RAY CRYSTALLOGRAPHY (2.7 ANGSTROMS) OF 229-458 IN COMPLEXES WITH INVERSE AGONISTS AND NCOA1</scope>
    <scope>FUNCTION</scope>
    <scope>IDENTIFICATION BY MASS SPECTROMETRY</scope>
</reference>
<reference key="19">
    <citation type="journal article" date="2006" name="Bioorg. Med. Chem. Lett.">
        <title>Structure-guided synthesis of tamoxifen analogs with improved selectivity for the orphan ERRgamma.</title>
        <authorList>
            <person name="Chao E.Y.H."/>
            <person name="Collins J.L."/>
            <person name="Gaillard S."/>
            <person name="Miller A.B."/>
            <person name="Wang L."/>
            <person name="Orband-Miller L.A."/>
            <person name="Nolte R.T."/>
            <person name="McDonnell D.P."/>
            <person name="Willson T.M."/>
            <person name="Zuercher W.J."/>
        </authorList>
    </citation>
    <scope>X-RAY CRYSTALLOGRAPHY (2.3 ANGSTROMS) OF 233-458 IN COMPLEX WITH INVERSE AGONIST</scope>
</reference>
<reference key="20">
    <citation type="journal article" date="2006" name="J. Biol. Chem.">
        <title>X-ray crystal structures of the estrogen-related receptor-gamma ligand binding domain in three functional states reveal the molecular basis of small molecule regulation.</title>
        <authorList>
            <person name="Wang L."/>
            <person name="Zuercher W.J."/>
            <person name="Consler T.G."/>
            <person name="Lambert M.H."/>
            <person name="Miller A.B."/>
            <person name="Orband-Miller L.A."/>
            <person name="McKee D.D."/>
            <person name="Willson T.M."/>
            <person name="Nolte R.T."/>
        </authorList>
    </citation>
    <scope>X-RAY CRYSTALLOGRAPHY (1.70 ANGSTROMS) OF 229-458 IN COMPLEXES WITH AGONIST AND INVERSE AGONIST; NRIP1 AND NCOR2</scope>
    <scope>SUBUNIT</scope>
</reference>
<evidence type="ECO:0000250" key="1"/>
<evidence type="ECO:0000255" key="2">
    <source>
        <dbReference type="PROSITE-ProRule" id="PRU00407"/>
    </source>
</evidence>
<evidence type="ECO:0000255" key="3">
    <source>
        <dbReference type="PROSITE-ProRule" id="PRU01189"/>
    </source>
</evidence>
<evidence type="ECO:0000256" key="4">
    <source>
        <dbReference type="SAM" id="MobiDB-lite"/>
    </source>
</evidence>
<evidence type="ECO:0000269" key="5">
    <source>
    </source>
</evidence>
<evidence type="ECO:0000269" key="6">
    <source>
    </source>
</evidence>
<evidence type="ECO:0000269" key="7">
    <source>
    </source>
</evidence>
<evidence type="ECO:0000269" key="8">
    <source>
    </source>
</evidence>
<evidence type="ECO:0000269" key="9">
    <source>
    </source>
</evidence>
<evidence type="ECO:0000269" key="10">
    <source>
    </source>
</evidence>
<evidence type="ECO:0000269" key="11">
    <source>
    </source>
</evidence>
<evidence type="ECO:0000269" key="12">
    <source>
    </source>
</evidence>
<evidence type="ECO:0000269" key="13">
    <source>
    </source>
</evidence>
<evidence type="ECO:0000269" key="14">
    <source>
    </source>
</evidence>
<evidence type="ECO:0000269" key="15">
    <source ref="7"/>
</evidence>
<evidence type="ECO:0000303" key="16">
    <source>
    </source>
</evidence>
<evidence type="ECO:0000303" key="17">
    <source>
    </source>
</evidence>
<evidence type="ECO:0000303" key="18">
    <source>
    </source>
</evidence>
<evidence type="ECO:0000303" key="19">
    <source>
    </source>
</evidence>
<evidence type="ECO:0000303" key="20">
    <source>
    </source>
</evidence>
<evidence type="ECO:0000305" key="21"/>
<evidence type="ECO:0000305" key="22">
    <source>
    </source>
</evidence>
<evidence type="ECO:0000305" key="23">
    <source>
    </source>
</evidence>
<evidence type="ECO:0007829" key="24">
    <source>
        <dbReference type="PDB" id="1TFC"/>
    </source>
</evidence>
<evidence type="ECO:0007829" key="25">
    <source>
        <dbReference type="PDB" id="6I65"/>
    </source>
</evidence>
<evidence type="ECO:0007829" key="26">
    <source>
        <dbReference type="PDB" id="8IFO"/>
    </source>
</evidence>
<protein>
    <recommendedName>
        <fullName>Estrogen-related receptor gamma</fullName>
    </recommendedName>
    <alternativeName>
        <fullName>ERR gamma-2</fullName>
    </alternativeName>
    <alternativeName>
        <fullName>Estrogen receptor-related protein 3</fullName>
    </alternativeName>
    <alternativeName>
        <fullName>Nuclear receptor subfamily 3 group B member 3</fullName>
    </alternativeName>
</protein>